<evidence type="ECO:0000250" key="1">
    <source>
        <dbReference type="UniProtKB" id="O88870"/>
    </source>
</evidence>
<evidence type="ECO:0000255" key="2"/>
<evidence type="ECO:0000269" key="3">
    <source>
    </source>
</evidence>
<evidence type="ECO:0000269" key="4">
    <source>
    </source>
</evidence>
<evidence type="ECO:0000269" key="5">
    <source>
    </source>
</evidence>
<evidence type="ECO:0000269" key="6">
    <source>
    </source>
</evidence>
<evidence type="ECO:0000269" key="7">
    <source>
    </source>
</evidence>
<evidence type="ECO:0000269" key="8">
    <source>
    </source>
</evidence>
<evidence type="ECO:0000269" key="9">
    <source>
    </source>
</evidence>
<evidence type="ECO:0000269" key="10">
    <source>
    </source>
</evidence>
<evidence type="ECO:0000269" key="11">
    <source>
    </source>
</evidence>
<evidence type="ECO:0000269" key="12">
    <source>
    </source>
</evidence>
<evidence type="ECO:0000269" key="13">
    <source>
    </source>
</evidence>
<evidence type="ECO:0000269" key="14">
    <source>
    </source>
</evidence>
<evidence type="ECO:0000269" key="15">
    <source>
    </source>
</evidence>
<evidence type="ECO:0000269" key="16">
    <source>
    </source>
</evidence>
<evidence type="ECO:0000269" key="17">
    <source>
    </source>
</evidence>
<evidence type="ECO:0000269" key="18">
    <source>
    </source>
</evidence>
<evidence type="ECO:0000269" key="19">
    <source>
    </source>
</evidence>
<evidence type="ECO:0000269" key="20">
    <source>
    </source>
</evidence>
<evidence type="ECO:0000269" key="21">
    <source>
    </source>
</evidence>
<evidence type="ECO:0000269" key="22">
    <source>
    </source>
</evidence>
<evidence type="ECO:0000269" key="23">
    <source>
    </source>
</evidence>
<evidence type="ECO:0000269" key="24">
    <source>
    </source>
</evidence>
<evidence type="ECO:0000269" key="25">
    <source>
    </source>
</evidence>
<evidence type="ECO:0000269" key="26">
    <source>
    </source>
</evidence>
<evidence type="ECO:0000269" key="27">
    <source>
    </source>
</evidence>
<evidence type="ECO:0000269" key="28">
    <source>
    </source>
</evidence>
<evidence type="ECO:0000269" key="29">
    <source>
    </source>
</evidence>
<evidence type="ECO:0000269" key="30">
    <source>
    </source>
</evidence>
<evidence type="ECO:0000269" key="31">
    <source>
    </source>
</evidence>
<evidence type="ECO:0000269" key="32">
    <source>
    </source>
</evidence>
<evidence type="ECO:0000269" key="33">
    <source>
    </source>
</evidence>
<evidence type="ECO:0000303" key="34">
    <source>
    </source>
</evidence>
<evidence type="ECO:0000303" key="35">
    <source>
    </source>
</evidence>
<evidence type="ECO:0000303" key="36">
    <source>
    </source>
</evidence>
<evidence type="ECO:0000305" key="37"/>
<evidence type="ECO:0000305" key="38">
    <source>
    </source>
</evidence>
<evidence type="ECO:0000312" key="39">
    <source>
        <dbReference type="HGNC" id="HGNC:12703"/>
    </source>
</evidence>
<evidence type="ECO:0007744" key="40">
    <source>
        <dbReference type="PDB" id="8D1I"/>
    </source>
</evidence>
<evidence type="ECO:0007744" key="41">
    <source>
        <dbReference type="PDB" id="8D1J"/>
    </source>
</evidence>
<evidence type="ECO:0007744" key="42">
    <source>
        <dbReference type="PDB" id="8D1K"/>
    </source>
</evidence>
<evidence type="ECO:0007744" key="43">
    <source>
        <dbReference type="PDB" id="8D1L"/>
    </source>
</evidence>
<evidence type="ECO:0007744" key="44">
    <source>
        <dbReference type="PDB" id="8D1M"/>
    </source>
</evidence>
<evidence type="ECO:0007744" key="45">
    <source>
        <dbReference type="PDB" id="8D1O"/>
    </source>
</evidence>
<evidence type="ECO:0007829" key="46">
    <source>
        <dbReference type="PDB" id="8D1I"/>
    </source>
</evidence>
<evidence type="ECO:0007829" key="47">
    <source>
        <dbReference type="PDB" id="8D1J"/>
    </source>
</evidence>
<evidence type="ECO:0007829" key="48">
    <source>
        <dbReference type="PDB" id="8D1L"/>
    </source>
</evidence>
<evidence type="ECO:0007829" key="49">
    <source>
        <dbReference type="PDB" id="8D1M"/>
    </source>
</evidence>
<evidence type="ECO:0007829" key="50">
    <source>
        <dbReference type="PDB" id="8D1O"/>
    </source>
</evidence>
<comment type="function">
    <text evidence="1 12 15 22 23 26 27 28 29 31">Ligand-gated anion channel that allows the movement of anions across cell membranes when activated by calcium (Ca2+) (PubMed:11904445, PubMed:12907679, PubMed:18179881, PubMed:18400985, PubMed:19853238, PubMed:21330666, PubMed:26200502, PubMed:26720466, PubMed:35789156). Allows the movement of chloride and hydrogencarbonate (PubMed:11904445, PubMed:12907679, PubMed:18179881, PubMed:18400985, PubMed:19853238, PubMed:21330666, PubMed:26200502, PubMed:26720466, PubMed:35789156). Found in a partially open conformation leading to significantly smaller chloride movement (PubMed:35789156). Upon F2R/PAR-1 activation, the sequestered calcium is released into the cytosol of astrocytes, leading to the (Ca2+)-dependent release of L-glutamate into the synaptic cleft that targets the neuronal postsynaptic GRIN2A/NMDAR receptor resulting in the synaptic plasticity regulation (By similarity). Upon activation of the norepinephrine-alpha-1 adrenergic receptor signaling pathway, transports as well D-serine than L-glutamate in a (Ca2+)-dependent manner, leading to activation of adjacent NMDAR receptors and therefore regulates the heterosynaptic long-term depression and metaplasticity during initial memory acquisition (By similarity). Releases the 4-aminobutanoate neurotransmitter in a (Ca2+)-dependent manner, and participates in its tonic release from cerebellar glial cells (By similarity).</text>
</comment>
<comment type="catalytic activity">
    <reaction evidence="12 15 22 23 26 27 28 29 31">
        <text>chloride(in) = chloride(out)</text>
        <dbReference type="Rhea" id="RHEA:29823"/>
        <dbReference type="ChEBI" id="CHEBI:17996"/>
    </reaction>
</comment>
<comment type="catalytic activity">
    <reaction evidence="23">
        <text>hydrogencarbonate(in) = hydrogencarbonate(out)</text>
        <dbReference type="Rhea" id="RHEA:28695"/>
        <dbReference type="ChEBI" id="CHEBI:17544"/>
    </reaction>
</comment>
<comment type="catalytic activity">
    <reaction evidence="1">
        <text>4-aminobutanoate(in) = 4-aminobutanoate(out)</text>
        <dbReference type="Rhea" id="RHEA:35035"/>
        <dbReference type="ChEBI" id="CHEBI:59888"/>
    </reaction>
</comment>
<comment type="catalytic activity">
    <reaction evidence="1">
        <text>L-glutamate(out) = L-glutamate(in)</text>
        <dbReference type="Rhea" id="RHEA:66336"/>
        <dbReference type="ChEBI" id="CHEBI:29985"/>
    </reaction>
</comment>
<comment type="activity regulation">
    <text evidence="12 15">Inactivated by sulfhydryl-reactive agents.</text>
</comment>
<comment type="subunit">
    <text evidence="30">Interacts with YWHAG; this interaction promotes the ligand-gated L-glutamate channel activity leading to the positive regulation of NMDA glutamate receptor activity through the L-glutamate secretion.</text>
</comment>
<comment type="interaction">
    <interactant intactId="EBI-11693370">
        <id>O76090</id>
    </interactant>
    <interactant intactId="EBI-11693370">
        <id>O76090</id>
        <label>BEST1</label>
    </interactant>
    <organismsDiffer>false</organismsDiffer>
    <experiments>2</experiments>
</comment>
<comment type="interaction">
    <interactant intactId="EBI-18631885">
        <id>O76090-4</id>
    </interactant>
    <interactant intactId="EBI-12070086">
        <id>Q5J8X5</id>
        <label>MS4A13</label>
    </interactant>
    <organismsDiffer>false</organismsDiffer>
    <experiments>3</experiments>
</comment>
<comment type="subcellular location">
    <subcellularLocation>
        <location evidence="28">Cell membrane</location>
        <topology evidence="21 31">Multi-pass membrane protein</topology>
    </subcellularLocation>
    <subcellularLocation>
        <location evidence="26 27 28">Basolateral cell membrane</location>
        <topology evidence="21 31">Multi-pass membrane protein</topology>
    </subcellularLocation>
    <text evidence="1">Localized at the surface membrane of microdomains adjacent to glutamatergic synapses.</text>
</comment>
<comment type="alternative products">
    <event type="alternative splicing"/>
    <isoform>
        <id>O76090-1</id>
        <name>1</name>
        <sequence type="displayed"/>
    </isoform>
    <isoform>
        <id>O76090-3</id>
        <name>3</name>
        <sequence type="described" ref="VSP_008973 VSP_008974"/>
    </isoform>
    <isoform>
        <id>O76090-4</id>
        <name>4</name>
        <sequence type="described" ref="VSP_008973 VSP_008975"/>
    </isoform>
</comment>
<comment type="tissue specificity">
    <text>Predominantly expressed in the basolateral membrane of the retinal pigment epithelium.</text>
</comment>
<comment type="domain">
    <text evidence="31">The C-terminal auto-inhibitory segment (AS) modulates the open/closed conformation of the channel (PubMed:35789156). In a closed conformation, the C-terminal auto-inhibitory segment constricts the channel concentrically by wrapping around the channel periphery in an inter-protomer manner (PubMed:35789156). To allow chloride movement, the C-terminal auto-inhibitory segment opens partially, leading to significantly smaller chloride movement (PubMed:35789156).</text>
</comment>
<comment type="disease" evidence="3 4 5 6 8 9 10 11 12 13 14 16 17 18 21 23 24 25 27 32 33">
    <disease id="DI-01124">
        <name>Macular dystrophy, vitelliform, 2</name>
        <acronym>VMD2</acronym>
        <description>An autosomal dominant form of macular degeneration that usually begins in childhood or adolescence. VMD2 is characterized by typical 'egg-yolk' macular lesions due to abnormal accumulation of lipofuscin within and beneath the retinal pigment epithelium cells. Progression of the disease leads to destruction of the retinal pigment epithelium and vision loss.</description>
        <dbReference type="MIM" id="153700"/>
    </disease>
    <text>The disease is caused by variants affecting the gene represented in this entry.</text>
</comment>
<comment type="disease" evidence="26">
    <disease id="DI-01386">
        <name>Retinitis pigmentosa 50</name>
        <acronym>RP50</acronym>
        <description>A retinal dystrophy belonging to the group of pigmentary retinopathies. Retinitis pigmentosa is characterized by retinal pigment deposits visible on fundus examination and primary loss of rod photoreceptor cells followed by secondary loss of cone photoreceptors. Patients typically have night vision blindness and loss of midperipheral visual field. As their condition progresses, they lose their far peripheral visual field and eventually central vision as well.</description>
        <dbReference type="MIM" id="613194"/>
    </disease>
    <text>The disease is caused by variants affecting the gene represented in this entry.</text>
</comment>
<comment type="disease" evidence="22 26 27 28 29">
    <disease id="DI-00187">
        <name>Bestrophinopathy, autosomal recessive</name>
        <acronym>ARB</acronym>
        <description>A retinopathy characterized by loss of central vision, an absent electro-oculogram light rise, and electroretinogram anomalies.</description>
        <dbReference type="MIM" id="611809"/>
    </disease>
    <text>The disease is caused by variants affecting the gene represented in this entry.</text>
</comment>
<comment type="disease" evidence="19">
    <disease id="DI-01125">
        <name>Vitreoretinochoroidopathy</name>
        <acronym>VRCP</acronym>
        <description>An autosomal dominant ocular disorder characterized by vitreoretinochoroidal dystrophy. The clinical presentation is variable. VRCP may be associated with cataract, nanophthalmos, microcornea, shallow anterior chamber, and glaucoma.</description>
        <dbReference type="MIM" id="193220"/>
    </disease>
    <text>The disease is caused by variants affecting the gene represented in this entry.</text>
</comment>
<comment type="similarity">
    <text evidence="37">Belongs to the anion channel-forming bestrophin (TC 1.A.46) family. Calcium-sensitive chloride channel subfamily.</text>
</comment>
<comment type="sequence caution" evidence="37">
    <conflict type="erroneous initiation">
        <sequence resource="EMBL-CDS" id="BAH12234"/>
    </conflict>
    <text>Truncated N-terminus.</text>
</comment>
<comment type="sequence caution" evidence="37">
    <conflict type="erroneous initiation">
        <sequence resource="EMBL-CDS" id="BAH13472"/>
    </conflict>
    <text>Truncated N-terminus.</text>
</comment>
<proteinExistence type="evidence at protein level"/>
<keyword id="KW-0002">3D-structure</keyword>
<keyword id="KW-0025">Alternative splicing</keyword>
<keyword id="KW-0106">Calcium</keyword>
<keyword id="KW-1003">Cell membrane</keyword>
<keyword id="KW-0868">Chloride</keyword>
<keyword id="KW-0869">Chloride channel</keyword>
<keyword id="KW-0225">Disease variant</keyword>
<keyword id="KW-0407">Ion channel</keyword>
<keyword id="KW-0406">Ion transport</keyword>
<keyword id="KW-0472">Membrane</keyword>
<keyword id="KW-0597">Phosphoprotein</keyword>
<keyword id="KW-1267">Proteomics identification</keyword>
<keyword id="KW-1185">Reference proteome</keyword>
<keyword id="KW-0682">Retinitis pigmentosa</keyword>
<keyword id="KW-0716">Sensory transduction</keyword>
<keyword id="KW-0812">Transmembrane</keyword>
<keyword id="KW-1133">Transmembrane helix</keyword>
<keyword id="KW-0813">Transport</keyword>
<keyword id="KW-0844">Vision</keyword>
<protein>
    <recommendedName>
        <fullName evidence="35">Bestrophin-1</fullName>
    </recommendedName>
    <alternativeName>
        <fullName evidence="36">TU15B</fullName>
    </alternativeName>
    <alternativeName>
        <fullName>Vitelliform macular dystrophy protein 2</fullName>
    </alternativeName>
</protein>
<organism>
    <name type="scientific">Homo sapiens</name>
    <name type="common">Human</name>
    <dbReference type="NCBI Taxonomy" id="9606"/>
    <lineage>
        <taxon>Eukaryota</taxon>
        <taxon>Metazoa</taxon>
        <taxon>Chordata</taxon>
        <taxon>Craniata</taxon>
        <taxon>Vertebrata</taxon>
        <taxon>Euteleostomi</taxon>
        <taxon>Mammalia</taxon>
        <taxon>Eutheria</taxon>
        <taxon>Euarchontoglires</taxon>
        <taxon>Primates</taxon>
        <taxon>Haplorrhini</taxon>
        <taxon>Catarrhini</taxon>
        <taxon>Hominidae</taxon>
        <taxon>Homo</taxon>
    </lineage>
</organism>
<dbReference type="EMBL" id="AF073500">
    <property type="protein sequence ID" value="AAC64926.1"/>
    <property type="molecule type" value="Genomic_DNA"/>
</dbReference>
<dbReference type="EMBL" id="AF073491">
    <property type="protein sequence ID" value="AAC64926.1"/>
    <property type="status" value="JOINED"/>
    <property type="molecule type" value="Genomic_DNA"/>
</dbReference>
<dbReference type="EMBL" id="AF073492">
    <property type="protein sequence ID" value="AAC64926.1"/>
    <property type="status" value="JOINED"/>
    <property type="molecule type" value="Genomic_DNA"/>
</dbReference>
<dbReference type="EMBL" id="AF073493">
    <property type="protein sequence ID" value="AAC64926.1"/>
    <property type="status" value="JOINED"/>
    <property type="molecule type" value="Genomic_DNA"/>
</dbReference>
<dbReference type="EMBL" id="AF073494">
    <property type="protein sequence ID" value="AAC64926.1"/>
    <property type="status" value="JOINED"/>
    <property type="molecule type" value="Genomic_DNA"/>
</dbReference>
<dbReference type="EMBL" id="AF073495">
    <property type="protein sequence ID" value="AAC64926.1"/>
    <property type="status" value="JOINED"/>
    <property type="molecule type" value="Genomic_DNA"/>
</dbReference>
<dbReference type="EMBL" id="AF073496">
    <property type="protein sequence ID" value="AAC64926.1"/>
    <property type="status" value="JOINED"/>
    <property type="molecule type" value="Genomic_DNA"/>
</dbReference>
<dbReference type="EMBL" id="AF073497">
    <property type="protein sequence ID" value="AAC64926.1"/>
    <property type="status" value="JOINED"/>
    <property type="molecule type" value="Genomic_DNA"/>
</dbReference>
<dbReference type="EMBL" id="AF073498">
    <property type="protein sequence ID" value="AAC64926.1"/>
    <property type="status" value="JOINED"/>
    <property type="molecule type" value="Genomic_DNA"/>
</dbReference>
<dbReference type="EMBL" id="AF073499">
    <property type="protein sequence ID" value="AAC64926.1"/>
    <property type="status" value="JOINED"/>
    <property type="molecule type" value="Genomic_DNA"/>
</dbReference>
<dbReference type="EMBL" id="AF057169">
    <property type="protein sequence ID" value="AAC64343.1"/>
    <property type="molecule type" value="mRNA"/>
</dbReference>
<dbReference type="EMBL" id="AF057170">
    <property type="protein sequence ID" value="AAC64344.1"/>
    <property type="molecule type" value="mRNA"/>
</dbReference>
<dbReference type="EMBL" id="AF073501">
    <property type="protein sequence ID" value="AAC33766.1"/>
    <property type="molecule type" value="mRNA"/>
</dbReference>
<dbReference type="EMBL" id="AY515704">
    <property type="protein sequence ID" value="AAR99654.1"/>
    <property type="molecule type" value="mRNA"/>
</dbReference>
<dbReference type="EMBL" id="CH471076">
    <property type="protein sequence ID" value="EAW73982.1"/>
    <property type="molecule type" value="Genomic_DNA"/>
</dbReference>
<dbReference type="EMBL" id="CH471076">
    <property type="protein sequence ID" value="EAW73985.1"/>
    <property type="molecule type" value="Genomic_DNA"/>
</dbReference>
<dbReference type="EMBL" id="BC015220">
    <property type="protein sequence ID" value="AAH15220.1"/>
    <property type="molecule type" value="mRNA"/>
</dbReference>
<dbReference type="EMBL" id="BC041664">
    <property type="protein sequence ID" value="AAH41664.1"/>
    <property type="molecule type" value="mRNA"/>
</dbReference>
<dbReference type="EMBL" id="AK289681">
    <property type="protein sequence ID" value="BAF82370.1"/>
    <property type="molecule type" value="mRNA"/>
</dbReference>
<dbReference type="EMBL" id="AK295998">
    <property type="protein sequence ID" value="BAH12234.1"/>
    <property type="status" value="ALT_INIT"/>
    <property type="molecule type" value="mRNA"/>
</dbReference>
<dbReference type="EMBL" id="AK301392">
    <property type="protein sequence ID" value="BAH13472.1"/>
    <property type="status" value="ALT_INIT"/>
    <property type="molecule type" value="mRNA"/>
</dbReference>
<dbReference type="CCDS" id="CCDS31580.1">
    <molecule id="O76090-1"/>
</dbReference>
<dbReference type="CCDS" id="CCDS44623.1">
    <molecule id="O76090-3"/>
</dbReference>
<dbReference type="RefSeq" id="NP_001132915.1">
    <molecule id="O76090-3"/>
    <property type="nucleotide sequence ID" value="NM_001139443.2"/>
</dbReference>
<dbReference type="RefSeq" id="NP_001287715.1">
    <molecule id="O76090-4"/>
    <property type="nucleotide sequence ID" value="NM_001300786.2"/>
</dbReference>
<dbReference type="RefSeq" id="NP_001287716.1">
    <property type="nucleotide sequence ID" value="NM_001300787.1"/>
</dbReference>
<dbReference type="RefSeq" id="NP_004174.1">
    <molecule id="O76090-1"/>
    <property type="nucleotide sequence ID" value="NM_004183.4"/>
</dbReference>
<dbReference type="RefSeq" id="XP_005274272.1">
    <property type="nucleotide sequence ID" value="XM_005274215.3"/>
</dbReference>
<dbReference type="RefSeq" id="XP_016873718.1">
    <property type="nucleotide sequence ID" value="XM_017018229.1"/>
</dbReference>
<dbReference type="PDB" id="8D1I">
    <property type="method" value="EM"/>
    <property type="resolution" value="1.82 A"/>
    <property type="chains" value="A/B/C/D/E=1-585"/>
</dbReference>
<dbReference type="PDB" id="8D1J">
    <property type="method" value="EM"/>
    <property type="resolution" value="2.05 A"/>
    <property type="chains" value="A/B/C/D/E=1-585"/>
</dbReference>
<dbReference type="PDB" id="8D1K">
    <property type="method" value="EM"/>
    <property type="resolution" value="2.28 A"/>
    <property type="chains" value="A/B/C/D/E=1-585"/>
</dbReference>
<dbReference type="PDB" id="8D1L">
    <property type="method" value="EM"/>
    <property type="resolution" value="2.12 A"/>
    <property type="chains" value="A/B/C/D/E=1-585"/>
</dbReference>
<dbReference type="PDB" id="8D1M">
    <property type="method" value="EM"/>
    <property type="resolution" value="3.11 A"/>
    <property type="chains" value="A/B/C/D/E=1-585"/>
</dbReference>
<dbReference type="PDB" id="8D1O">
    <property type="method" value="EM"/>
    <property type="resolution" value="2.44 A"/>
    <property type="chains" value="A/B/C/D/E=1-345"/>
</dbReference>
<dbReference type="PDB" id="9CTQ">
    <property type="method" value="EM"/>
    <property type="resolution" value="2.41 A"/>
    <property type="chains" value="A/B/C/D/E=2-585"/>
</dbReference>
<dbReference type="PDB" id="9CTR">
    <property type="method" value="EM"/>
    <property type="resolution" value="2.42 A"/>
    <property type="chains" value="A/B/C/D/E=2-585"/>
</dbReference>
<dbReference type="PDB" id="9CTS">
    <property type="method" value="EM"/>
    <property type="resolution" value="2.45 A"/>
    <property type="chains" value="A/B/C/D/E=2-585"/>
</dbReference>
<dbReference type="PDB" id="9CTT">
    <property type="method" value="EM"/>
    <property type="resolution" value="2.50 A"/>
    <property type="chains" value="A/B/C/D/E=2-585"/>
</dbReference>
<dbReference type="PDB" id="9DYL">
    <property type="method" value="EM"/>
    <property type="resolution" value="2.60 A"/>
    <property type="chains" value="A/B/C/D/E=1-585"/>
</dbReference>
<dbReference type="PDB" id="9DYM">
    <property type="method" value="EM"/>
    <property type="resolution" value="2.67 A"/>
    <property type="chains" value="A/B/C/D/E=1-585"/>
</dbReference>
<dbReference type="PDBsum" id="8D1I"/>
<dbReference type="PDBsum" id="8D1J"/>
<dbReference type="PDBsum" id="8D1K"/>
<dbReference type="PDBsum" id="8D1L"/>
<dbReference type="PDBsum" id="8D1M"/>
<dbReference type="PDBsum" id="8D1O"/>
<dbReference type="PDBsum" id="9CTQ"/>
<dbReference type="PDBsum" id="9CTR"/>
<dbReference type="PDBsum" id="9CTS"/>
<dbReference type="PDBsum" id="9CTT"/>
<dbReference type="PDBsum" id="9DYL"/>
<dbReference type="PDBsum" id="9DYM"/>
<dbReference type="EMDB" id="EMD-27131"/>
<dbReference type="EMDB" id="EMD-27132"/>
<dbReference type="EMDB" id="EMD-27133"/>
<dbReference type="EMDB" id="EMD-27134"/>
<dbReference type="EMDB" id="EMD-27135"/>
<dbReference type="EMDB" id="EMD-27137"/>
<dbReference type="EMDB" id="EMD-45915"/>
<dbReference type="EMDB" id="EMD-45916"/>
<dbReference type="EMDB" id="EMD-45917"/>
<dbReference type="EMDB" id="EMD-45918"/>
<dbReference type="EMDB" id="EMD-47308"/>
<dbReference type="EMDB" id="EMD-47309"/>
<dbReference type="SMR" id="O76090"/>
<dbReference type="BioGRID" id="113279">
    <property type="interactions" value="13"/>
</dbReference>
<dbReference type="FunCoup" id="O76090">
    <property type="interactions" value="406"/>
</dbReference>
<dbReference type="IntAct" id="O76090">
    <property type="interactions" value="3"/>
</dbReference>
<dbReference type="STRING" id="9606.ENSP00000399709"/>
<dbReference type="TCDB" id="1.A.46.1.1">
    <property type="family name" value="the anion channel-forming bestrophin (bestrophin) family"/>
</dbReference>
<dbReference type="GlyGen" id="O76090">
    <property type="glycosylation" value="3 sites"/>
</dbReference>
<dbReference type="iPTMnet" id="O76090"/>
<dbReference type="PhosphoSitePlus" id="O76090"/>
<dbReference type="BioMuta" id="BEST1"/>
<dbReference type="MassIVE" id="O76090"/>
<dbReference type="PaxDb" id="9606-ENSP00000399709"/>
<dbReference type="PeptideAtlas" id="O76090"/>
<dbReference type="ProteomicsDB" id="50408">
    <molecule id="O76090-1"/>
</dbReference>
<dbReference type="ProteomicsDB" id="50409">
    <molecule id="O76090-3"/>
</dbReference>
<dbReference type="ProteomicsDB" id="50410">
    <molecule id="O76090-4"/>
</dbReference>
<dbReference type="Antibodypedia" id="28370">
    <property type="antibodies" value="313 antibodies from 29 providers"/>
</dbReference>
<dbReference type="DNASU" id="7439"/>
<dbReference type="Ensembl" id="ENST00000378043.9">
    <molecule id="O76090-1"/>
    <property type="protein sequence ID" value="ENSP00000367282.4"/>
    <property type="gene ID" value="ENSG00000167995.17"/>
</dbReference>
<dbReference type="Ensembl" id="ENST00000449131.6">
    <molecule id="O76090-3"/>
    <property type="protein sequence ID" value="ENSP00000399709.2"/>
    <property type="gene ID" value="ENSG00000167995.17"/>
</dbReference>
<dbReference type="GeneID" id="7439"/>
<dbReference type="KEGG" id="hsa:7439"/>
<dbReference type="MANE-Select" id="ENST00000378043.9">
    <property type="protein sequence ID" value="ENSP00000367282.4"/>
    <property type="RefSeq nucleotide sequence ID" value="NM_004183.4"/>
    <property type="RefSeq protein sequence ID" value="NP_004174.1"/>
</dbReference>
<dbReference type="UCSC" id="uc001nsr.3">
    <molecule id="O76090-1"/>
    <property type="organism name" value="human"/>
</dbReference>
<dbReference type="AGR" id="HGNC:12703"/>
<dbReference type="CTD" id="7439"/>
<dbReference type="DisGeNET" id="7439"/>
<dbReference type="GeneCards" id="BEST1"/>
<dbReference type="GeneReviews" id="BEST1"/>
<dbReference type="HGNC" id="HGNC:12703">
    <property type="gene designation" value="BEST1"/>
</dbReference>
<dbReference type="HPA" id="ENSG00000167995">
    <property type="expression patterns" value="Tissue enhanced (bone marrow, brain)"/>
</dbReference>
<dbReference type="MalaCards" id="BEST1"/>
<dbReference type="MIM" id="153700">
    <property type="type" value="phenotype"/>
</dbReference>
<dbReference type="MIM" id="193220">
    <property type="type" value="phenotype"/>
</dbReference>
<dbReference type="MIM" id="607854">
    <property type="type" value="gene"/>
</dbReference>
<dbReference type="MIM" id="611809">
    <property type="type" value="phenotype"/>
</dbReference>
<dbReference type="MIM" id="613194">
    <property type="type" value="phenotype"/>
</dbReference>
<dbReference type="neXtProt" id="NX_O76090"/>
<dbReference type="OpenTargets" id="ENSG00000167995"/>
<dbReference type="Orphanet" id="99000">
    <property type="disease" value="Adult-onset foveomacular vitelliform dystrophy"/>
</dbReference>
<dbReference type="Orphanet" id="3086">
    <property type="disease" value="Autosomal dominant vitreoretinochoroidopathy"/>
</dbReference>
<dbReference type="Orphanet" id="139455">
    <property type="disease" value="Autosomal recessive bestrophinopathy"/>
</dbReference>
<dbReference type="Orphanet" id="1243">
    <property type="disease" value="Best vitelliform macular dystrophy"/>
</dbReference>
<dbReference type="Orphanet" id="263347">
    <property type="disease" value="MRCS syndrome"/>
</dbReference>
<dbReference type="Orphanet" id="35612">
    <property type="disease" value="Nanophthalmos"/>
</dbReference>
<dbReference type="Orphanet" id="791">
    <property type="disease" value="Retinitis pigmentosa"/>
</dbReference>
<dbReference type="PharmGKB" id="PA162377454"/>
<dbReference type="VEuPathDB" id="HostDB:ENSG00000167995"/>
<dbReference type="eggNOG" id="KOG3547">
    <property type="taxonomic scope" value="Eukaryota"/>
</dbReference>
<dbReference type="GeneTree" id="ENSGT00940000158650"/>
<dbReference type="HOGENOM" id="CLU_018069_5_0_1"/>
<dbReference type="InParanoid" id="O76090"/>
<dbReference type="OMA" id="SHYTYQD"/>
<dbReference type="OrthoDB" id="201595at2759"/>
<dbReference type="PAN-GO" id="O76090">
    <property type="GO annotations" value="0 GO annotations based on evolutionary models"/>
</dbReference>
<dbReference type="PhylomeDB" id="O76090"/>
<dbReference type="TreeFam" id="TF315803"/>
<dbReference type="PathwayCommons" id="O76090"/>
<dbReference type="Reactome" id="R-HSA-2672351">
    <property type="pathway name" value="Stimuli-sensing channels"/>
</dbReference>
<dbReference type="SignaLink" id="O76090"/>
<dbReference type="SIGNOR" id="O76090"/>
<dbReference type="BioGRID-ORCS" id="7439">
    <property type="hits" value="15 hits in 1143 CRISPR screens"/>
</dbReference>
<dbReference type="ChiTaRS" id="BEST1">
    <property type="organism name" value="human"/>
</dbReference>
<dbReference type="GeneWiki" id="Bestrophin_1"/>
<dbReference type="GenomeRNAi" id="7439"/>
<dbReference type="Pharos" id="O76090">
    <property type="development level" value="Tbio"/>
</dbReference>
<dbReference type="PRO" id="PR:O76090"/>
<dbReference type="Proteomes" id="UP000005640">
    <property type="component" value="Chromosome 11"/>
</dbReference>
<dbReference type="RNAct" id="O76090">
    <property type="molecule type" value="protein"/>
</dbReference>
<dbReference type="Bgee" id="ENSG00000167995">
    <property type="expression patterns" value="Expressed in pigmented layer of retina and 146 other cell types or tissues"/>
</dbReference>
<dbReference type="ExpressionAtlas" id="O76090">
    <property type="expression patterns" value="baseline and differential"/>
</dbReference>
<dbReference type="GO" id="GO:0009925">
    <property type="term" value="C:basal plasma membrane"/>
    <property type="evidence" value="ECO:0000314"/>
    <property type="project" value="ARUK-UCL"/>
</dbReference>
<dbReference type="GO" id="GO:0016323">
    <property type="term" value="C:basolateral plasma membrane"/>
    <property type="evidence" value="ECO:0000314"/>
    <property type="project" value="UniProtKB"/>
</dbReference>
<dbReference type="GO" id="GO:0034707">
    <property type="term" value="C:chloride channel complex"/>
    <property type="evidence" value="ECO:0000314"/>
    <property type="project" value="BHF-UCL"/>
</dbReference>
<dbReference type="GO" id="GO:0005829">
    <property type="term" value="C:cytosol"/>
    <property type="evidence" value="ECO:0000304"/>
    <property type="project" value="HGNC-UCL"/>
</dbReference>
<dbReference type="GO" id="GO:0016020">
    <property type="term" value="C:membrane"/>
    <property type="evidence" value="ECO:0000304"/>
    <property type="project" value="ProtInc"/>
</dbReference>
<dbReference type="GO" id="GO:0098857">
    <property type="term" value="C:membrane microdomain"/>
    <property type="evidence" value="ECO:0000250"/>
    <property type="project" value="UniProtKB"/>
</dbReference>
<dbReference type="GO" id="GO:0005886">
    <property type="term" value="C:plasma membrane"/>
    <property type="evidence" value="ECO:0000314"/>
    <property type="project" value="UniProtKB"/>
</dbReference>
<dbReference type="GO" id="GO:0098793">
    <property type="term" value="C:presynapse"/>
    <property type="evidence" value="ECO:0007669"/>
    <property type="project" value="GOC"/>
</dbReference>
<dbReference type="GO" id="GO:0160133">
    <property type="term" value="F:bicarbonate channel activity"/>
    <property type="evidence" value="ECO:0000314"/>
    <property type="project" value="UniProtKB"/>
</dbReference>
<dbReference type="GO" id="GO:0015106">
    <property type="term" value="F:bicarbonate transmembrane transporter activity"/>
    <property type="evidence" value="ECO:0000304"/>
    <property type="project" value="Reactome"/>
</dbReference>
<dbReference type="GO" id="GO:0005254">
    <property type="term" value="F:chloride channel activity"/>
    <property type="evidence" value="ECO:0000314"/>
    <property type="project" value="MGI"/>
</dbReference>
<dbReference type="GO" id="GO:0042802">
    <property type="term" value="F:identical protein binding"/>
    <property type="evidence" value="ECO:0000353"/>
    <property type="project" value="IntAct"/>
</dbReference>
<dbReference type="GO" id="GO:0005229">
    <property type="term" value="F:intracellularly calcium-gated chloride channel activity"/>
    <property type="evidence" value="ECO:0000314"/>
    <property type="project" value="UniProtKB"/>
</dbReference>
<dbReference type="GO" id="GO:0022834">
    <property type="term" value="F:ligand-gated channel activity"/>
    <property type="evidence" value="ECO:0000250"/>
    <property type="project" value="UniProtKB"/>
</dbReference>
<dbReference type="GO" id="GO:0006821">
    <property type="term" value="P:chloride transport"/>
    <property type="evidence" value="ECO:0000314"/>
    <property type="project" value="MGI"/>
</dbReference>
<dbReference type="GO" id="GO:0050908">
    <property type="term" value="P:detection of light stimulus involved in visual perception"/>
    <property type="evidence" value="ECO:0007669"/>
    <property type="project" value="Ensembl"/>
</dbReference>
<dbReference type="GO" id="GO:0061534">
    <property type="term" value="P:gamma-aminobutyric acid secretion, neurotransmission"/>
    <property type="evidence" value="ECO:0000250"/>
    <property type="project" value="UniProtKB"/>
</dbReference>
<dbReference type="GO" id="GO:0014047">
    <property type="term" value="P:glutamate secretion"/>
    <property type="evidence" value="ECO:0000250"/>
    <property type="project" value="UniProtKB"/>
</dbReference>
<dbReference type="GO" id="GO:0034220">
    <property type="term" value="P:monoatomic ion transmembrane transport"/>
    <property type="evidence" value="ECO:0000304"/>
    <property type="project" value="Reactome"/>
</dbReference>
<dbReference type="GO" id="GO:0051259">
    <property type="term" value="P:protein complex oligomerization"/>
    <property type="evidence" value="ECO:0000314"/>
    <property type="project" value="UniProtKB"/>
</dbReference>
<dbReference type="GO" id="GO:0051924">
    <property type="term" value="P:regulation of calcium ion transport"/>
    <property type="evidence" value="ECO:0007669"/>
    <property type="project" value="Ensembl"/>
</dbReference>
<dbReference type="GO" id="GO:0048167">
    <property type="term" value="P:regulation of synaptic plasticity"/>
    <property type="evidence" value="ECO:0000250"/>
    <property type="project" value="UniProtKB"/>
</dbReference>
<dbReference type="GO" id="GO:0030321">
    <property type="term" value="P:transepithelial chloride transport"/>
    <property type="evidence" value="ECO:0000314"/>
    <property type="project" value="HGNC-UCL"/>
</dbReference>
<dbReference type="GO" id="GO:0007601">
    <property type="term" value="P:visual perception"/>
    <property type="evidence" value="ECO:0000304"/>
    <property type="project" value="ProtInc"/>
</dbReference>
<dbReference type="InterPro" id="IPR000615">
    <property type="entry name" value="Bestrophin"/>
</dbReference>
<dbReference type="InterPro" id="IPR021134">
    <property type="entry name" value="Bestrophin-like"/>
</dbReference>
<dbReference type="PANTHER" id="PTHR10736">
    <property type="entry name" value="BESTROPHIN"/>
    <property type="match status" value="1"/>
</dbReference>
<dbReference type="PANTHER" id="PTHR10736:SF4">
    <property type="entry name" value="BESTROPHIN-1"/>
    <property type="match status" value="1"/>
</dbReference>
<dbReference type="Pfam" id="PF01062">
    <property type="entry name" value="Bestrophin"/>
    <property type="match status" value="1"/>
</dbReference>
<gene>
    <name evidence="39" type="primary">BEST1</name>
    <name evidence="36" type="synonym">VMD2</name>
</gene>
<accession>O76090</accession>
<accession>A8K0W6</accession>
<accession>B7Z3J8</accession>
<accession>B7Z736</accession>
<accession>O75904</accession>
<accession>Q53YQ9</accession>
<accession>Q8IUR9</accession>
<accession>Q8IZ80</accession>
<name>BEST1_HUMAN</name>
<sequence length="585" mass="67684">MTITYTSQVANARLGSFSRLLLCWRGSIYKLLYGEFLIFLLCYYIIRFIYRLALTEEQQLMFEKLTLYCDSYIQLIPISFVLGFYVTLVVTRWWNQYENLPWPDRLMSLVSGFVEGKDEQGRLLRRTLIRYANLGNVLILRSVSTAVYKRFPSAQHLVQAGFMTPAEHKQLEKLSLPHNMFWVPWVWFANLSMKAWLGGRIRDPILLQSLLNEMNTLRTQCGHLYAYDWISIPLVYTQVVTVAVYSFFLTCLVGRQFLNPAKAYPGHELDLVVPVFTFLQFFFYVGWLKVAEQLINPFGEDDDDFETNWIVDRNLQVSLLAVDEMHQDLPRMEPDMYWNKPEPQPPYTAASAQFRRASFMGSTFNISLNKEEMEFQPNQEDEEDAHAGIIGRFLGLQSHDHHPPRANSRTKLLWPKRESLLHEGLPKNHKAAKQNVRGQEDNKAWKLKAVDAFKSAPLYQRPGYYSAPQTPLSPTPMFFPLEPSAPSKLHSVTGIDTKDKSLKTVSSGAKKSFELLSESDGALMEHPEVSQVRRKTVEFNLTDMPEIPENHLKEPLEQSPTNIHTTLKDHMDPYWALENRDEAHS</sequence>
<reference key="1">
    <citation type="journal article" date="1998" name="Hum. Mol. Genet.">
        <title>Mutations in a novel gene, VMD2, encoding a protein of unknown properties cause juvenile-onset vitelliform macular dystrophy (Best's disease).</title>
        <authorList>
            <person name="Marquardt A."/>
            <person name="Stoehr H."/>
            <person name="Passmore L.A."/>
            <person name="Kraemer F."/>
            <person name="Rivera A."/>
            <person name="Weber B.H.F."/>
        </authorList>
    </citation>
    <scope>NUCLEOTIDE SEQUENCE [GENOMIC DNA]</scope>
    <scope>VARIANTS VMD2 MET-9; THR-10; CYS-24; GLN-25; GLN-218; ASN-227; CYS-227; MET-235; ILE-295 DEL; ALA-297 AND SER-305</scope>
</reference>
<reference key="2">
    <citation type="journal article" date="1998" name="Nat. Genet.">
        <title>Identification of the gene responsible for Best macular dystrophy.</title>
        <authorList>
            <person name="Petrukhin K."/>
            <person name="Koisti M.J."/>
            <person name="Bakall B."/>
            <person name="Li W."/>
            <person name="Xie G."/>
            <person name="Marknell T."/>
            <person name="Sandgren O."/>
            <person name="Forsman K."/>
            <person name="Holmgren G."/>
            <person name="Andreasson S."/>
            <person name="Vujic M."/>
            <person name="Bergen A.A.B."/>
            <person name="McGarty-Dugan V."/>
            <person name="Figueroa D."/>
            <person name="Austin C.P."/>
            <person name="Metzker M.L."/>
            <person name="Caskey C.T."/>
            <person name="Wadelius C."/>
        </authorList>
    </citation>
    <scope>NUCLEOTIDE SEQUENCE [MRNA] (ISOFORM 1)</scope>
    <scope>VARIANTS VMD2 PRO-6; ALA-9; HIS-85; CYS-93; GLU-104; ASN-227 AND GLU-299</scope>
</reference>
<reference key="3">
    <citation type="journal article" date="2003" name="J. Biol. Chem.">
        <title>Structure-function analysis of the bestrophin family of anion channels.</title>
        <authorList>
            <person name="Tsunenari T."/>
            <person name="Sun H."/>
            <person name="Williams J."/>
            <person name="Cahill H."/>
            <person name="Smallwood P."/>
            <person name="Yau K.-W."/>
            <person name="Nathans J."/>
        </authorList>
    </citation>
    <scope>NUCLEOTIDE SEQUENCE [MRNA] (ISOFORM 1)</scope>
    <scope>FUNCTION</scope>
    <scope>TRANSPORTER ACTIVITY</scope>
    <scope>ACTIVITY REGULATION</scope>
</reference>
<reference key="4">
    <citation type="submission" date="2005-07" db="EMBL/GenBank/DDBJ databases">
        <authorList>
            <person name="Mural R.J."/>
            <person name="Istrail S."/>
            <person name="Sutton G.G."/>
            <person name="Florea L."/>
            <person name="Halpern A.L."/>
            <person name="Mobarry C.M."/>
            <person name="Lippert R."/>
            <person name="Walenz B."/>
            <person name="Shatkay H."/>
            <person name="Dew I."/>
            <person name="Miller J.R."/>
            <person name="Flanigan M.J."/>
            <person name="Edwards N.J."/>
            <person name="Bolanos R."/>
            <person name="Fasulo D."/>
            <person name="Halldorsson B.V."/>
            <person name="Hannenhalli S."/>
            <person name="Turner R."/>
            <person name="Yooseph S."/>
            <person name="Lu F."/>
            <person name="Nusskern D.R."/>
            <person name="Shue B.C."/>
            <person name="Zheng X.H."/>
            <person name="Zhong F."/>
            <person name="Delcher A.L."/>
            <person name="Huson D.H."/>
            <person name="Kravitz S.A."/>
            <person name="Mouchard L."/>
            <person name="Reinert K."/>
            <person name="Remington K.A."/>
            <person name="Clark A.G."/>
            <person name="Waterman M.S."/>
            <person name="Eichler E.E."/>
            <person name="Adams M.D."/>
            <person name="Hunkapiller M.W."/>
            <person name="Myers E.W."/>
            <person name="Venter J.C."/>
        </authorList>
    </citation>
    <scope>NUCLEOTIDE SEQUENCE [LARGE SCALE GENOMIC DNA]</scope>
</reference>
<reference key="5">
    <citation type="journal article" date="2004" name="Genome Res.">
        <title>The status, quality, and expansion of the NIH full-length cDNA project: the Mammalian Gene Collection (MGC).</title>
        <authorList>
            <consortium name="The MGC Project Team"/>
        </authorList>
    </citation>
    <scope>NUCLEOTIDE SEQUENCE [LARGE SCALE MRNA] (ISOFORMS 3 AND 4)</scope>
    <scope>VARIANT VAL-357</scope>
    <source>
        <tissue>Brain</tissue>
    </source>
</reference>
<reference key="6">
    <citation type="journal article" date="2004" name="Nat. Genet.">
        <title>Complete sequencing and characterization of 21,243 full-length human cDNAs.</title>
        <authorList>
            <person name="Ota T."/>
            <person name="Suzuki Y."/>
            <person name="Nishikawa T."/>
            <person name="Otsuki T."/>
            <person name="Sugiyama T."/>
            <person name="Irie R."/>
            <person name="Wakamatsu A."/>
            <person name="Hayashi K."/>
            <person name="Sato H."/>
            <person name="Nagai K."/>
            <person name="Kimura K."/>
            <person name="Makita H."/>
            <person name="Sekine M."/>
            <person name="Obayashi M."/>
            <person name="Nishi T."/>
            <person name="Shibahara T."/>
            <person name="Tanaka T."/>
            <person name="Ishii S."/>
            <person name="Yamamoto J."/>
            <person name="Saito K."/>
            <person name="Kawai Y."/>
            <person name="Isono Y."/>
            <person name="Nakamura Y."/>
            <person name="Nagahari K."/>
            <person name="Murakami K."/>
            <person name="Yasuda T."/>
            <person name="Iwayanagi T."/>
            <person name="Wagatsuma M."/>
            <person name="Shiratori A."/>
            <person name="Sudo H."/>
            <person name="Hosoiri T."/>
            <person name="Kaku Y."/>
            <person name="Kodaira H."/>
            <person name="Kondo H."/>
            <person name="Sugawara M."/>
            <person name="Takahashi M."/>
            <person name="Kanda K."/>
            <person name="Yokoi T."/>
            <person name="Furuya T."/>
            <person name="Kikkawa E."/>
            <person name="Omura Y."/>
            <person name="Abe K."/>
            <person name="Kamihara K."/>
            <person name="Katsuta N."/>
            <person name="Sato K."/>
            <person name="Tanikawa M."/>
            <person name="Yamazaki M."/>
            <person name="Ninomiya K."/>
            <person name="Ishibashi T."/>
            <person name="Yamashita H."/>
            <person name="Murakawa K."/>
            <person name="Fujimori K."/>
            <person name="Tanai H."/>
            <person name="Kimata M."/>
            <person name="Watanabe M."/>
            <person name="Hiraoka S."/>
            <person name="Chiba Y."/>
            <person name="Ishida S."/>
            <person name="Ono Y."/>
            <person name="Takiguchi S."/>
            <person name="Watanabe S."/>
            <person name="Yosida M."/>
            <person name="Hotuta T."/>
            <person name="Kusano J."/>
            <person name="Kanehori K."/>
            <person name="Takahashi-Fujii A."/>
            <person name="Hara H."/>
            <person name="Tanase T.-O."/>
            <person name="Nomura Y."/>
            <person name="Togiya S."/>
            <person name="Komai F."/>
            <person name="Hara R."/>
            <person name="Takeuchi K."/>
            <person name="Arita M."/>
            <person name="Imose N."/>
            <person name="Musashino K."/>
            <person name="Yuuki H."/>
            <person name="Oshima A."/>
            <person name="Sasaki N."/>
            <person name="Aotsuka S."/>
            <person name="Yoshikawa Y."/>
            <person name="Matsunawa H."/>
            <person name="Ichihara T."/>
            <person name="Shiohata N."/>
            <person name="Sano S."/>
            <person name="Moriya S."/>
            <person name="Momiyama H."/>
            <person name="Satoh N."/>
            <person name="Takami S."/>
            <person name="Terashima Y."/>
            <person name="Suzuki O."/>
            <person name="Nakagawa S."/>
            <person name="Senoh A."/>
            <person name="Mizoguchi H."/>
            <person name="Goto Y."/>
            <person name="Shimizu F."/>
            <person name="Wakebe H."/>
            <person name="Hishigaki H."/>
            <person name="Watanabe T."/>
            <person name="Sugiyama A."/>
            <person name="Takemoto M."/>
            <person name="Kawakami B."/>
            <person name="Yamazaki M."/>
            <person name="Watanabe K."/>
            <person name="Kumagai A."/>
            <person name="Itakura S."/>
            <person name="Fukuzumi Y."/>
            <person name="Fujimori Y."/>
            <person name="Komiyama M."/>
            <person name="Tashiro H."/>
            <person name="Tanigami A."/>
            <person name="Fujiwara T."/>
            <person name="Ono T."/>
            <person name="Yamada K."/>
            <person name="Fujii Y."/>
            <person name="Ozaki K."/>
            <person name="Hirao M."/>
            <person name="Ohmori Y."/>
            <person name="Kawabata A."/>
            <person name="Hikiji T."/>
            <person name="Kobatake N."/>
            <person name="Inagaki H."/>
            <person name="Ikema Y."/>
            <person name="Okamoto S."/>
            <person name="Okitani R."/>
            <person name="Kawakami T."/>
            <person name="Noguchi S."/>
            <person name="Itoh T."/>
            <person name="Shigeta K."/>
            <person name="Senba T."/>
            <person name="Matsumura K."/>
            <person name="Nakajima Y."/>
            <person name="Mizuno T."/>
            <person name="Morinaga M."/>
            <person name="Sasaki M."/>
            <person name="Togashi T."/>
            <person name="Oyama M."/>
            <person name="Hata H."/>
            <person name="Watanabe M."/>
            <person name="Komatsu T."/>
            <person name="Mizushima-Sugano J."/>
            <person name="Satoh T."/>
            <person name="Shirai Y."/>
            <person name="Takahashi Y."/>
            <person name="Nakagawa K."/>
            <person name="Okumura K."/>
            <person name="Nagase T."/>
            <person name="Nomura N."/>
            <person name="Kikuchi H."/>
            <person name="Masuho Y."/>
            <person name="Yamashita R."/>
            <person name="Nakai K."/>
            <person name="Yada T."/>
            <person name="Nakamura Y."/>
            <person name="Ohara O."/>
            <person name="Isogai T."/>
            <person name="Sugano S."/>
        </authorList>
    </citation>
    <scope>NUCLEOTIDE SEQUENCE [LARGE SCALE MRNA] OF 52-585 (ISOFORM 1)</scope>
    <source>
        <tissue>Amygdala</tissue>
        <tissue>Subthalamic nucleus</tissue>
        <tissue>Synovium</tissue>
    </source>
</reference>
<reference key="7">
    <citation type="journal article" date="2002" name="Proc. Natl. Acad. Sci. U.S.A.">
        <title>The vitelliform macular dystrophy protein defines a new family of chloride channels.</title>
        <authorList>
            <person name="Sun H."/>
            <person name="Tsunenari T."/>
            <person name="Yau K.-W."/>
            <person name="Nathans J."/>
        </authorList>
    </citation>
    <scope>FUNCTION</scope>
    <scope>TRANSPORTER ACTIVITY</scope>
    <scope>ACTIVITY REGULATION</scope>
    <scope>SUBUNIT</scope>
    <scope>MUTAGENESIS OF CYS-23; CYS-42; CYS-69; CYS-221 AND CYS-251</scope>
    <scope>VARIANTS VMD2 HIS-85; CYS-92; SER-218 AND GLU-299</scope>
    <scope>CHARACTERIZATION OF VARIANTS VMD2 HIS-85; CYS-92; SER-218 AND GLU-299</scope>
</reference>
<reference key="8">
    <citation type="journal article" date="2007" name="J. Biol. Chem.">
        <title>Insertion and topology of normal and mutant bestrophin-1 in the endoplasmic reticulum membrane.</title>
        <authorList>
            <person name="Milenkovic V.M."/>
            <person name="Rivera A."/>
            <person name="Horling F."/>
            <person name="Weber B.H."/>
        </authorList>
    </citation>
    <scope>TOPOLOGY</scope>
    <scope>VARIANTS VMD2 ASN-73; HIS-85; ARG-140 AND PHE-281 DEL</scope>
    <scope>CHARACTERIZATION OF VARIANTS VMD2 ASN-73; HIS-85; ARG-140 AND PHE-281 DEL</scope>
</reference>
<reference key="9">
    <citation type="journal article" date="2008" name="Am. J. Hum. Genet.">
        <title>Biallelic mutation of BEST1 causes a distinct retinopathy in humans.</title>
        <authorList>
            <person name="Burgess R."/>
            <person name="Millar I.D."/>
            <person name="Leroy B.P."/>
            <person name="Urquhart J.E."/>
            <person name="Fearon I.M."/>
            <person name="De Baere E."/>
            <person name="Brown P.D."/>
            <person name="Robson A.G."/>
            <person name="Wright G.A."/>
            <person name="Kestelyn P."/>
            <person name="Holder G.E."/>
            <person name="Webster A.R."/>
            <person name="Manson F.D.C."/>
            <person name="Black G.C.M."/>
        </authorList>
    </citation>
    <scope>FUNCTION</scope>
    <scope>TRANSPORTER ACTIVITY</scope>
    <scope>VARIANTS ARB PRO-41; HIS-141; ALA-152; ASN-312; MET-317 AND THR-325</scope>
    <scope>CHARACTERIZATION OF VARIANTS ARB HIS-141 AND ALA-152</scope>
</reference>
<reference key="10">
    <citation type="journal article" date="2008" name="Am. J. Physiol.">
        <title>Bestrophin Cl- channels are highly permeable to HCO3-.</title>
        <authorList>
            <person name="Qu Z."/>
            <person name="Hartzell H.C."/>
        </authorList>
    </citation>
    <scope>FUNCTION</scope>
    <scope>TRANSPORTER ACTIVITY</scope>
    <scope>CHARACTERIZATION OF VARIANTS VMD2 HIS-85; CYS-92 AND CYS-93</scope>
</reference>
<reference key="11">
    <citation type="journal article" date="2009" name="Am. J. Hum. Genet.">
        <title>Missense mutations in a retinal pigment epithelium protein, bestrophin-1, cause retinitis pigmentosa.</title>
        <authorList>
            <person name="Davidson A.E."/>
            <person name="Millar I.D."/>
            <person name="Urquhart J.E."/>
            <person name="Burgess-Mullan R."/>
            <person name="Shweikh Y."/>
            <person name="Parry N."/>
            <person name="O'Sullivan J."/>
            <person name="Maher G.J."/>
            <person name="McKibbin M."/>
            <person name="Downes S.M."/>
            <person name="Lotery A.J."/>
            <person name="Jacobson S.G."/>
            <person name="Brown P.D."/>
            <person name="Black G.C."/>
            <person name="Manson F.D."/>
        </authorList>
    </citation>
    <scope>FUNCTION</scope>
    <scope>TRANSPORTER ACTIVITY</scope>
    <scope>SUBCELLULAR LOCATION</scope>
    <scope>VARIANTS RP50 VAL-140; THR-205; CYS-227 AND ASN-228</scope>
    <scope>CHARACTERIZATION OF VARIANTS RP50 VAL-140; THR-205 AND ASN-228</scope>
    <scope>CHARACTERIZATION OF VARIANT ARB ASN-312</scope>
</reference>
<reference key="12">
    <citation type="journal article" date="2011" name="Invest. Ophthalmol. Vis. Sci.">
        <title>Functional characterization of bestrophin-1 missense mutations associated with autosomal recessive bestrophinopathy.</title>
        <authorList>
            <person name="Davidson A.E."/>
            <person name="Millar I.D."/>
            <person name="Burgess-Mullan R."/>
            <person name="Maher G.J."/>
            <person name="Urquhart J.E."/>
            <person name="Brown P.D."/>
            <person name="Black G.C."/>
            <person name="Manson F.D."/>
        </authorList>
    </citation>
    <scope>FUNCTION</scope>
    <scope>TRANSPORTER ACTIVITY</scope>
    <scope>SUBCELLULAR LOCATION</scope>
    <scope>CHARACTERIZATION OF VARIANTS ARB PRO-41; VAL-140; HIS-141; ALA-152; VAL-195; TRP-202; ASN-312; MET-317 AND THR-325</scope>
    <scope>CHARACTERIZATION OF VARIANTS VMD2 HIS-85 AND ARG-237</scope>
</reference>
<reference key="13">
    <citation type="journal article" date="2015" name="Invest. Ophthalmol. Vis. Sci.">
        <title>Autosomal recessive bestrophinopathy is not associated with the loss of bestrophin-1 anion channel function in a patient with a novel BEST1 mutation.</title>
        <authorList>
            <person name="Johnson A.A."/>
            <person name="Bachman L.A."/>
            <person name="Gilles B.J."/>
            <person name="Cross S.D."/>
            <person name="Stelzig K.E."/>
            <person name="Resch Z.T."/>
            <person name="Marmorstein L.Y."/>
            <person name="Pulido J.S."/>
            <person name="Marmorstein A.D."/>
        </authorList>
    </citation>
    <scope>FUNCTION</scope>
    <scope>TRANSPORTER ACTIVITY</scope>
    <scope>SUBCELLULAR LOCATION</scope>
    <scope>OLIGOMERIZATION</scope>
    <scope>VARIANT ARB HIS-141</scope>
    <scope>CHARACTERIZATION OF VARIANT ARB HIS-141</scope>
</reference>
<reference key="14">
    <citation type="journal article" date="2015" name="Invest. Ophthalmol. Vis. Sci.">
        <title>A novel BEST1 mutation in autosomal recessive bestrophinopathy.</title>
        <authorList>
            <person name="Lee C.S."/>
            <person name="Jun I."/>
            <person name="Choi S.I."/>
            <person name="Lee J.H."/>
            <person name="Lee M.G."/>
            <person name="Lee S.C."/>
            <person name="Kim E.K."/>
        </authorList>
    </citation>
    <scope>FUNCTION</scope>
    <scope>TRANSPORTER ACTIVITY</scope>
    <scope>VARIANTS ARB PRO-40 AND VAL-195</scope>
    <scope>CHARACTERIZATION OF VARIANTS ARB PRO-40; CYS-93 AND VAL-195</scope>
</reference>
<reference key="15">
    <citation type="journal article" date="2017" name="Mol. Brain">
        <title>Direct interaction with 14-3-3gamma promotes surface expression of Best1 channel in astrocyte.</title>
        <authorList>
            <person name="Oh S.J."/>
            <person name="Woo J."/>
            <person name="Lee Y.S."/>
            <person name="Cho M."/>
            <person name="Kim E."/>
            <person name="Cho N.C."/>
            <person name="Park J.Y."/>
            <person name="Pae A.N."/>
            <person name="Justin Lee C."/>
            <person name="Hwang E.M."/>
        </authorList>
    </citation>
    <scope>INTERACTION WITH YWHAG</scope>
</reference>
<reference evidence="40 41 42 43 44 45" key="16">
    <citation type="journal article" date="2022" name="Nat. Commun.">
        <title>Structures and gating mechanisms of human bestrophin anion channels.</title>
        <authorList>
            <person name="Owji A.P."/>
            <person name="Wang J."/>
            <person name="Kittredge A."/>
            <person name="Clark Z."/>
            <person name="Zhang Y."/>
            <person name="Hendrickson W.A."/>
            <person name="Yang T."/>
        </authorList>
    </citation>
    <scope>STRUCTURE BY ELECTRON MICROSCOPY (1.82 ANGSTROMS) IN COMPLEX WITH CALCIUM AND CHLORIDE</scope>
    <scope>FUNCTION</scope>
    <scope>TRANSPORTER ACTIVITY</scope>
    <scope>TOPOLOGY</scope>
    <scope>SUBUNIT</scope>
    <scope>DOMAIN</scope>
    <scope>REGION</scope>
</reference>
<reference key="17">
    <citation type="journal article" date="1999" name="Genomics">
        <title>Bestrophin gene mutations in patients with Best vitelliform macular dystrophy.</title>
        <authorList>
            <person name="Caldwell G.M."/>
            <person name="Kakuk L.E."/>
            <person name="Griesinger I.B."/>
            <person name="Simpson S.A."/>
            <person name="Nowak N.J."/>
            <person name="Small K.W."/>
            <person name="Maumenee I.H."/>
            <person name="Rosenfeld P.J."/>
            <person name="Sieving P.A."/>
            <person name="Shows T.B."/>
            <person name="Ayyagari R."/>
        </authorList>
    </citation>
    <scope>VARIANTS VMD2 HIS-13; CYS-93; CYS-218; ASP-300; GLU-301 AND ILE-307</scope>
</reference>
<reference key="18">
    <citation type="journal article" date="1999" name="Hum. Genet.">
        <title>The mutation spectrum of the bestrophin protein -- functional implications.</title>
        <authorList>
            <person name="Bakall B."/>
            <person name="Marknell T."/>
            <person name="Ingvast S."/>
            <person name="Koisti M.J."/>
            <person name="Sandgren O."/>
            <person name="Li W."/>
            <person name="Bergen A.A.B."/>
            <person name="Andreasson S."/>
            <person name="Rosenberg T."/>
            <person name="Petrukhin K."/>
            <person name="Wadelius C."/>
        </authorList>
    </citation>
    <scope>VARIANTS VMD2 VAL-10; VAL-82; CYS-92; HIS-96; SER-135; CYS-218; SER-218 AND LYS-293</scope>
</reference>
<reference key="19">
    <citation type="journal article" date="1999" name="Hum. Genet.">
        <title>Evaluation of the Best disease gene in patients with age-related macular degeneration and other maculopathies.</title>
        <authorList>
            <person name="Allikmets R."/>
            <person name="Seddon J.M."/>
            <person name="Bernstein P.S."/>
            <person name="Hutchinson A."/>
            <person name="Atkinson A."/>
            <person name="Sharma S."/>
            <person name="Gerrard B."/>
            <person name="Li W."/>
            <person name="Metzker M.L."/>
            <person name="Wadelius C."/>
            <person name="Caskey C.T."/>
            <person name="Dean M."/>
            <person name="Petrukhin K."/>
        </authorList>
    </citation>
    <scope>VARIANTS VMD2 LYS-146; SER-297 AND ASP-300</scope>
    <scope>VARIANTS GLN-119; ILE-216; ALA-525; LYS-557; ALA-561 AND PHE-567</scope>
</reference>
<reference key="20">
    <citation type="journal article" date="2000" name="Am. J. Ophthalmol.">
        <title>A novel spontaneous missense mutation in VMD2 gene is a cause of a Best macular dystrophy sporadic case.</title>
        <authorList>
            <person name="Palomba G."/>
            <person name="Rozzo C."/>
            <person name="Angius A."/>
            <person name="Pierrottet C.O."/>
            <person name="Orzalesi N."/>
            <person name="Pirastu M."/>
        </authorList>
    </citation>
    <scope>VARIANT VMD2 TRP-221</scope>
</reference>
<reference key="21">
    <citation type="journal article" date="2000" name="Arch. Ophthalmol.">
        <title>Mutation analysis of 3 genes in patients with Leber congenital amaurosis.</title>
        <authorList>
            <person name="Lotery A.J."/>
            <person name="Namperumalsamy P."/>
            <person name="Jacobson S.G."/>
            <person name="Weleber R.G."/>
            <person name="Fishman G.A."/>
            <person name="Musarella M.A."/>
            <person name="Hoyt C.S."/>
            <person name="Heon E."/>
            <person name="Levin A."/>
            <person name="Jan J."/>
            <person name="Lam B."/>
            <person name="Carr R.E."/>
            <person name="Franklin A."/>
            <person name="Radha S."/>
            <person name="Andorf J.L."/>
            <person name="Sheffield V.C."/>
            <person name="Stone E.M."/>
        </authorList>
    </citation>
    <scope>VARIANT VAL-222</scope>
</reference>
<reference key="22">
    <citation type="journal article" date="2000" name="Eur. J. Hum. Genet.">
        <title>Mutations in the VMD2 gene are associated with juvenile-onset vitelliform macular dystrophy (Best disease) and adult vitelliform macular dystrophy but not age-related macular degeneration.</title>
        <authorList>
            <person name="Kraemer F."/>
            <person name="White K."/>
            <person name="Pauleikhoff D."/>
            <person name="Gehrig A."/>
            <person name="Passmore L."/>
            <person name="Rivera A."/>
            <person name="Rudolph G."/>
            <person name="Kellner U."/>
            <person name="Andrassi M."/>
            <person name="Lorenz B."/>
            <person name="Rohrschneider K."/>
            <person name="Blankenagel A."/>
            <person name="Jurklies B."/>
            <person name="Schilling H."/>
            <person name="Schuett F."/>
            <person name="Holz F.G."/>
            <person name="Weber B.H."/>
        </authorList>
    </citation>
    <scope>VARIANTS VMD2 PRO-6; MET-9; THR-10; VAL-21; TRP-25; ARG-27; HIS-47; LEU-58; SER-92; LYS-99; ARG-100; ASN-209; SER-218; MET-224; ARG-231; ARG-237; VAL-243; ILE-295 DEL; LYS-300; ASN-301; GLU-301; THR-310; GLY-311 AND ASN-312</scope>
</reference>
<reference key="23">
    <citation type="journal article" date="2000" name="Invest. Ophthalmol. Vis. Sci.">
        <title>Allelic variation in the VMD2 gene in best disease and age-related macular degeneration.</title>
        <authorList>
            <person name="Lotery A.J."/>
            <person name="Munier F.L."/>
            <person name="Fishman G.A."/>
            <person name="Weleber R.G."/>
            <person name="Jacobson S.G."/>
            <person name="Affatigato L.M."/>
            <person name="Nichols B.E."/>
            <person name="Schorderet D.F."/>
            <person name="Sheffield V.C."/>
            <person name="Stone E.M."/>
        </authorList>
    </citation>
    <scope>VARIANTS AGE-RELATED MACULAR DEGENERATION CYS-105 AND ILE-275</scope>
    <scope>VARIANTS VMD2 ARG-6; CYS-17; CYS-24; TRP-25; ARG-30; LEU-80; ILE-91; THR-101; GLN-119; LYS-133; SER-135; ARG-140; HIS-141; VAL-195; THR-201; ILE-207; CYS-218; HIS-218; VAL-222; PRO-224; ASN-227; CYS-227; THR-243; LEU-276; HIS-296; ALA-297; ASP-300; LYS-300; GLY-302; VAL-302; ASP-306; GLY-306; ALA-307 AND ILE-307</scope>
</reference>
<reference key="24">
    <citation type="journal article" date="2001" name="Hum. Mutat.">
        <title>Identification of novel VMD2 gene mutations in patients with Best vitelliform macular dystrophy.</title>
        <authorList>
            <person name="Marchant D."/>
            <person name="Gogat K."/>
            <person name="Boutboul S."/>
            <person name="Pequignot M."/>
            <person name="Sternberg C."/>
            <person name="Dureau P."/>
            <person name="Roche O."/>
            <person name="Uteza Y."/>
            <person name="Hache J.C."/>
            <person name="Puech B."/>
            <person name="Puech V."/>
            <person name="Dumur V."/>
            <person name="Mouillon M."/>
            <person name="Munier F.L."/>
            <person name="Schorderet D.F."/>
            <person name="Marsac C."/>
            <person name="Dufier J.-L."/>
            <person name="Abitbol M."/>
        </authorList>
    </citation>
    <scope>VARIANTS VMD2 PHE-16; CYS-17; ASN-73; HIS-92; CYS-218; HIS-218; LEU-235 AND SER-296</scope>
</reference>
<reference key="25">
    <citation type="journal article" date="2001" name="Ophthalmic Genet.">
        <title>Best's vitelliform macular dystrophy caused by a new mutation (Val89Ala) in the VMD2 gene.</title>
        <authorList>
            <person name="Eksandh L."/>
            <person name="Bakall B."/>
            <person name="Bauer B."/>
            <person name="Wadelius C."/>
            <person name="Andreasson S."/>
        </authorList>
    </citation>
    <scope>VARIANT VMD2 ALA-89</scope>
</reference>
<reference key="26">
    <citation type="journal article" date="2002" name="Ophthalmic Genet.">
        <title>Identification of a novel VMD2 mutation in Japanese patients with Best disease.</title>
        <authorList>
            <person name="Yanagi Y."/>
            <person name="Sekine H."/>
            <person name="Mori M."/>
        </authorList>
    </citation>
    <scope>VARIANT VMD2 THR-295</scope>
</reference>
<reference key="27">
    <citation type="journal article" date="2002" name="Ophthalmic Genet.">
        <title>Use of denaturing HPLC and automated sequencing to screen the VMD2 gene for mutations associated with Best's vitelliform macular dystrophy.</title>
        <authorList>
            <person name="Marchant D."/>
            <person name="Gogat K."/>
            <person name="Dureau P."/>
            <person name="Sainton K."/>
            <person name="Sternberg C."/>
            <person name="Gadin S."/>
            <person name="Dollfus H."/>
            <person name="Brasseur G."/>
            <person name="Hache J.C."/>
            <person name="Dumur V."/>
            <person name="Puech V."/>
            <person name="Munier F.L."/>
            <person name="Schorderet D.F."/>
            <person name="Marsac C."/>
            <person name="Menasche M."/>
            <person name="Dufier J.-L."/>
            <person name="Abitbol M."/>
        </authorList>
    </citation>
    <scope>VARIANTS VMD2 HIS-302; GLU-303 AND SER-308</scope>
</reference>
<reference key="28">
    <citation type="journal article" date="2003" name="Hum. Mutat.">
        <title>Ten novel mutations in VMD2 associated with Best macular dystrophy (BMD).</title>
        <authorList>
            <person name="Kraemer F."/>
            <person name="Mohr N."/>
            <person name="Kellner U."/>
            <person name="Rudolph G."/>
            <person name="Weber B.H.F."/>
        </authorList>
    </citation>
    <scope>VARIANTS VMD2 ILE-11; ARG-26; HIS-29; PRO-41; ARG-102; HIS-104; ASN-241; VAL-294 AND SER-298</scope>
</reference>
<reference key="29">
    <citation type="journal article" date="2003" name="Ophthalmology">
        <title>Phenotype and genotype correlations in two best families.</title>
        <authorList>
            <person name="Seddon J.M."/>
            <person name="Sharma S."/>
            <person name="Chong S."/>
            <person name="Hutchinson A."/>
            <person name="Allikmets R."/>
            <person name="Adelman R.A."/>
        </authorList>
    </citation>
    <scope>VARIANTS VMD2 SER-297 AND ASP-300</scope>
</reference>
<reference key="30">
    <citation type="journal article" date="2004" name="Hum. Genet.">
        <title>Gene Symbol: VMD2. Disease: Best vitelliform macular dystrophy (VMD2).</title>
        <authorList>
            <person name="Li Y."/>
            <person name="Wang G.L."/>
            <person name="Dong B."/>
        </authorList>
    </citation>
    <scope>VARIANT VMD2 LEU-113</scope>
</reference>
<reference key="31">
    <citation type="journal article" date="2004" name="Invest. Ophthalmol. Vis. Sci.">
        <title>Mutations of VMD2 splicing regulators cause nanophthalmos and autosomal dominant vitreoretinochoroidopathy (ADVIRC).</title>
        <authorList>
            <person name="Yardley J."/>
            <person name="Leroy B.P."/>
            <person name="Hart-Holden N."/>
            <person name="Lafaut B.A."/>
            <person name="Loeys B."/>
            <person name="Messiaen L.M."/>
            <person name="Perveen R."/>
            <person name="Reddy M.A."/>
            <person name="Bhattacharya S.S."/>
            <person name="Traboulsi E."/>
            <person name="Baralle D."/>
            <person name="De Laey J.-J."/>
            <person name="Puech B."/>
            <person name="Kestelyn P."/>
            <person name="Moore A.T."/>
            <person name="Manson F.D.C."/>
            <person name="Black G.C.M."/>
        </authorList>
    </citation>
    <scope>VARIANTS VRCP MET-86; CYS-236 AND MET-239</scope>
</reference>
<reference key="32">
    <citation type="journal article" date="2008" name="Ophthalmic Genet.">
        <title>Mutation analysis of the VMD2 gene in Thai families with Best macular dystrophy.</title>
        <authorList>
            <person name="Atchaneeyasakul L.O."/>
            <person name="Jinda W."/>
            <person name="Sakolsatayadorn N."/>
            <person name="Trinavarat A."/>
            <person name="Ruangvoravate N."/>
            <person name="Thanasombatskul N."/>
            <person name="Thongnoppakhun W."/>
            <person name="Limwongse C."/>
        </authorList>
    </citation>
    <scope>VARIANTS VMD2 CYS-218 AND MET-242</scope>
</reference>
<reference key="33">
    <citation type="journal article" date="2009" name="Retina">
        <title>Clinical and molecular genetic analysis of Best vitelliform macular dystrophy.</title>
        <authorList>
            <person name="Boon C.J.F."/>
            <person name="Theelen T."/>
            <person name="Hoefsloot E.H."/>
            <person name="van Schooneveld M.J."/>
            <person name="Keunen J.E.E."/>
            <person name="Cremers F.P.M."/>
            <person name="Klevering B.J."/>
            <person name="Hoyng C.B."/>
        </authorList>
    </citation>
    <scope>VARIANTS VMD2 THR-3; PRO-6; VAL-82; ASN-227; VAL-243; ALA-299 AND 302-ASP--ASP-304 DEL</scope>
</reference>
<feature type="chain" id="PRO_0000143114" description="Bestrophin-1">
    <location>
        <begin position="1"/>
        <end position="585"/>
    </location>
</feature>
<feature type="topological domain" description="Cytoplasmic" evidence="38">
    <location>
        <begin position="1"/>
        <end position="31"/>
    </location>
</feature>
<feature type="transmembrane region" description="Helical" evidence="21 31">
    <location>
        <begin position="32"/>
        <end position="51"/>
    </location>
</feature>
<feature type="topological domain" description="Extracellular" evidence="38">
    <location>
        <begin position="52"/>
        <end position="60"/>
    </location>
</feature>
<feature type="transmembrane region" description="Helical" evidence="21 31">
    <location>
        <begin position="61"/>
        <end position="82"/>
    </location>
</feature>
<feature type="topological domain" description="Cytoplasmic" evidence="2">
    <location>
        <begin position="83"/>
        <end position="237"/>
    </location>
</feature>
<feature type="transmembrane region" description="Helical" evidence="21 31">
    <location>
        <begin position="238"/>
        <end position="255"/>
    </location>
</feature>
<feature type="topological domain" description="Extracellular" evidence="38">
    <location>
        <begin position="256"/>
        <end position="274"/>
    </location>
</feature>
<feature type="transmembrane region" description="Helical" evidence="21 31">
    <location>
        <begin position="275"/>
        <end position="288"/>
    </location>
</feature>
<feature type="topological domain" description="Cytoplasmic" evidence="38">
    <location>
        <begin position="289"/>
        <end position="585"/>
    </location>
</feature>
<feature type="region of interest" description="Auto-inhibitory segment" evidence="31">
    <location>
        <begin position="346"/>
        <end position="379"/>
    </location>
</feature>
<feature type="binding site" description="in other chain" evidence="31 40 41 42 43 45">
    <location>
        <position position="10"/>
    </location>
    <ligand>
        <name>Ca(2+)</name>
        <dbReference type="ChEBI" id="CHEBI:29108"/>
        <note>ligand shared between two neighboring subunits</note>
    </ligand>
</feature>
<feature type="binding site" evidence="31 40 41 42 43 45">
    <location>
        <position position="293"/>
    </location>
    <ligand>
        <name>Ca(2+)</name>
        <dbReference type="ChEBI" id="CHEBI:29108"/>
        <note>ligand shared between two neighboring subunits</note>
    </ligand>
</feature>
<feature type="binding site" evidence="31 40 41 42 43 45">
    <location>
        <position position="296"/>
    </location>
    <ligand>
        <name>Ca(2+)</name>
        <dbReference type="ChEBI" id="CHEBI:29108"/>
        <note>ligand shared between two neighboring subunits</note>
    </ligand>
</feature>
<feature type="binding site" evidence="31 40 41 42 43 45">
    <location>
        <position position="301"/>
    </location>
    <ligand>
        <name>Ca(2+)</name>
        <dbReference type="ChEBI" id="CHEBI:29108"/>
        <note>ligand shared between two neighboring subunits</note>
    </ligand>
</feature>
<feature type="binding site" evidence="31 40 41 42 43 45">
    <location>
        <position position="304"/>
    </location>
    <ligand>
        <name>Ca(2+)</name>
        <dbReference type="ChEBI" id="CHEBI:29108"/>
        <note>ligand shared between two neighboring subunits</note>
    </ligand>
</feature>
<feature type="splice variant" id="VSP_008973" description="In isoform 3 and isoform 4." evidence="34">
    <location>
        <begin position="1"/>
        <end position="60"/>
    </location>
</feature>
<feature type="splice variant" id="VSP_008975" description="In isoform 4." evidence="34">
    <location>
        <begin position="290"/>
        <end position="316"/>
    </location>
</feature>
<feature type="splice variant" id="VSP_008974" description="In isoform 3." evidence="34">
    <original>DEAHS</original>
    <variation>SVLHLNQGHCIALCPTPASLALSLPFLHNFLGFHHCQSTLDLRPALAWGIYLATFTGILGKCSGPFLTSPWYHPEDFLGPGEGR</variation>
    <location>
        <begin position="581"/>
        <end position="585"/>
    </location>
</feature>
<feature type="sequence variant" id="VAR_058273" description="In VMD2." evidence="25">
    <original>I</original>
    <variation>T</variation>
    <location>
        <position position="3"/>
    </location>
</feature>
<feature type="sequence variant" id="VAR_000830" description="In VMD2; dbSNP:rs28940275." evidence="9 25 32">
    <original>T</original>
    <variation>P</variation>
    <location>
        <position position="6"/>
    </location>
</feature>
<feature type="sequence variant" id="VAR_017366" description="In VMD2; dbSNP:rs281865204." evidence="8">
    <original>T</original>
    <variation>R</variation>
    <location>
        <position position="6"/>
    </location>
</feature>
<feature type="sequence variant" id="VAR_000831" description="In VMD2; dbSNP:rs281865205." evidence="32">
    <original>V</original>
    <variation>A</variation>
    <location>
        <position position="9"/>
    </location>
</feature>
<feature type="sequence variant" id="VAR_000832" description="In VMD2; dbSNP:rs28940276." evidence="9 33">
    <original>V</original>
    <variation>M</variation>
    <location>
        <position position="9"/>
    </location>
</feature>
<feature type="sequence variant" id="VAR_000833" description="In VMD2; dbSNP:rs281865206." evidence="9 33">
    <original>A</original>
    <variation>T</variation>
    <location>
        <position position="10"/>
    </location>
</feature>
<feature type="sequence variant" id="VAR_010468" description="In VMD2; dbSNP:rs281865207." evidence="4">
    <original>A</original>
    <variation>V</variation>
    <location>
        <position position="10"/>
    </location>
</feature>
<feature type="sequence variant" id="VAR_017367" description="In VMD2; dbSNP:rs281865208." evidence="17">
    <original>N</original>
    <variation>I</variation>
    <location>
        <position position="11"/>
    </location>
</feature>
<feature type="sequence variant" id="VAR_010469" description="In VMD2; dbSNP:rs281865209." evidence="3">
    <original>R</original>
    <variation>H</variation>
    <location>
        <position position="13"/>
    </location>
</feature>
<feature type="sequence variant" id="VAR_010470" description="In VMD2; dbSNP:rs281865210." evidence="10">
    <original>S</original>
    <variation>F</variation>
    <location>
        <position position="16"/>
    </location>
</feature>
<feature type="sequence variant" id="VAR_010471" description="In VMD2; dbSNP:rs281865211." evidence="8 10">
    <original>F</original>
    <variation>C</variation>
    <location>
        <position position="17"/>
    </location>
</feature>
<feature type="sequence variant" id="VAR_000834" description="In VMD2; dbSNP:rs281865212." evidence="9">
    <original>L</original>
    <variation>V</variation>
    <location>
        <position position="21"/>
    </location>
</feature>
<feature type="sequence variant" id="VAR_000835" description="In VMD2; dbSNP:rs281865213." evidence="8 33">
    <original>W</original>
    <variation>C</variation>
    <location>
        <position position="24"/>
    </location>
</feature>
<feature type="sequence variant" id="VAR_000836" description="In VMD2; dbSNP:rs281865215." evidence="33">
    <original>R</original>
    <variation>Q</variation>
    <location>
        <position position="25"/>
    </location>
</feature>
<feature type="sequence variant" id="VAR_000837" description="In VMD2; dbSNP:rs281865214." evidence="8 9">
    <original>R</original>
    <variation>W</variation>
    <location>
        <position position="25"/>
    </location>
</feature>
<feature type="sequence variant" id="VAR_017368" description="In VMD2." evidence="17">
    <original>G</original>
    <variation>R</variation>
    <location>
        <position position="26"/>
    </location>
</feature>
<feature type="sequence variant" id="VAR_000838" description="In VMD2; dbSNP:rs281865216." evidence="9">
    <original>S</original>
    <variation>R</variation>
    <location>
        <position position="27"/>
    </location>
</feature>
<feature type="sequence variant" id="VAR_017369" description="In VMD2; dbSNP:rs281865217." evidence="17">
    <original>Y</original>
    <variation>H</variation>
    <location>
        <position position="29"/>
    </location>
</feature>
<feature type="sequence variant" id="VAR_017370" description="In VMD2; dbSNP:rs281865218." evidence="8">
    <original>K</original>
    <variation>R</variation>
    <location>
        <position position="30"/>
    </location>
</feature>
<feature type="sequence variant" id="VAR_075346" description="In ARB; uncertain significance; no effect on subcellular location in transfected HEK293T cells; loss of chloride conductance." evidence="29">
    <original>L</original>
    <variation>P</variation>
    <location>
        <position position="40"/>
    </location>
</feature>
<feature type="sequence variant" id="VAR_017371" description="In VMD2 and ARB; no effect on subcellular location in transfected MDCK.2 cells; possible decrease in protein stability; reduced chloride conductance; dbSNP:rs121918288." evidence="17 22 27">
    <original>L</original>
    <variation>P</variation>
    <location>
        <position position="41"/>
    </location>
</feature>
<feature type="sequence variant" id="VAR_017372" description="In VMD2; dbSNP:rs28940278." evidence="9">
    <original>R</original>
    <variation>H</variation>
    <location>
        <position position="47"/>
    </location>
</feature>
<feature type="sequence variant" id="VAR_000839" description="In VMD2; dbSNP:rs281865529." evidence="9">
    <original>Q</original>
    <variation>L</variation>
    <location>
        <position position="58"/>
    </location>
</feature>
<feature type="sequence variant" id="VAR_000840">
    <original>L</original>
    <variation>V</variation>
    <location>
        <position position="67"/>
    </location>
</feature>
<feature type="sequence variant" id="VAR_010472" description="In VMD2; abolishes membrane insertion.; dbSNP:rs1591280714." evidence="10 21">
    <original>I</original>
    <variation>N</variation>
    <location>
        <position position="73"/>
    </location>
</feature>
<feature type="sequence variant" id="VAR_017373" description="In VMD2; dbSNP:rs281865221." evidence="8">
    <original>F</original>
    <variation>L</variation>
    <location>
        <position position="80"/>
    </location>
</feature>
<feature type="sequence variant" id="VAR_010473" description="In VMD2; dbSNP:rs281865530." evidence="4 25">
    <original>L</original>
    <variation>V</variation>
    <location>
        <position position="82"/>
    </location>
</feature>
<feature type="sequence variant" id="VAR_000841" description="In VMD2; decreased chloride and bicarbonate conductance; does not affect protein homooligomerization; abolishes membrane insertion; dbSNP:rs28940274." evidence="12 21 23 27 32">
    <original>Y</original>
    <variation>H</variation>
    <location>
        <position position="85"/>
    </location>
</feature>
<feature type="sequence variant" id="VAR_058274" description="In VRCP; dbSNP:rs121918289." evidence="19">
    <original>V</original>
    <variation>M</variation>
    <location>
        <position position="86"/>
    </location>
</feature>
<feature type="sequence variant" id="VAR_017374" description="In VMD2." evidence="11">
    <original>V</original>
    <variation>A</variation>
    <location>
        <position position="89"/>
    </location>
</feature>
<feature type="sequence variant" id="VAR_017375" description="In VMD2; dbSNP:rs281865223." evidence="8">
    <original>T</original>
    <variation>I</variation>
    <location>
        <position position="91"/>
    </location>
</feature>
<feature type="sequence variant" id="VAR_010474" description="In VMD2; loss of cloride and bicarbonate conductance; does not affect protein homooligomerization; dbSNP:rs281865224." evidence="4 12 23">
    <original>R</original>
    <variation>C</variation>
    <location>
        <position position="92"/>
    </location>
</feature>
<feature type="sequence variant" id="VAR_010475" description="In VMD2; dbSNP:rs281865225." evidence="10">
    <original>R</original>
    <variation>H</variation>
    <location>
        <position position="92"/>
    </location>
</feature>
<feature type="sequence variant" id="VAR_000842" description="In VMD2; dbSNP:rs281865224." evidence="9">
    <original>R</original>
    <variation>S</variation>
    <location>
        <position position="92"/>
    </location>
</feature>
<feature type="sequence variant" id="VAR_000843" description="In VMD2; no effect on subcellular location in transfected HEK293T cells; loss of cloride and bicarbonate conductance; dbSNP:rs28940273." evidence="3 23 29 32">
    <original>W</original>
    <variation>C</variation>
    <location>
        <position position="93"/>
    </location>
</feature>
<feature type="sequence variant" id="VAR_010476" description="In VMD2; dbSNP:rs281865226." evidence="4">
    <original>Q</original>
    <variation>H</variation>
    <location>
        <position position="96"/>
    </location>
</feature>
<feature type="sequence variant" id="VAR_000844" description="In VMD2; dbSNP:rs281865227." evidence="9">
    <original>N</original>
    <variation>K</variation>
    <location>
        <position position="99"/>
    </location>
</feature>
<feature type="sequence variant" id="VAR_000845" description="In VMD2; dbSNP:rs281865228." evidence="9">
    <original>L</original>
    <variation>R</variation>
    <location>
        <position position="100"/>
    </location>
</feature>
<feature type="sequence variant" id="VAR_017376" description="In VMD2; dbSNP:rs281865229." evidence="8">
    <original>P</original>
    <variation>T</variation>
    <location>
        <position position="101"/>
    </location>
</feature>
<feature type="sequence variant" id="VAR_017377" description="In VMD2; dbSNP:rs281865230." evidence="17">
    <original>W</original>
    <variation>R</variation>
    <location>
        <position position="102"/>
    </location>
</feature>
<feature type="sequence variant" id="VAR_000846" description="In VMD2; dbSNP:rs281865232." evidence="32">
    <original>D</original>
    <variation>E</variation>
    <location>
        <position position="104"/>
    </location>
</feature>
<feature type="sequence variant" id="VAR_017378" description="In VMD2; dbSNP:rs281865231." evidence="17">
    <original>D</original>
    <variation>H</variation>
    <location>
        <position position="104"/>
    </location>
</feature>
<feature type="sequence variant" id="VAR_025731" description="In age-related macular degeneration; dbSNP:rs281865273." evidence="8">
    <original>R</original>
    <variation>C</variation>
    <location>
        <position position="105"/>
    </location>
</feature>
<feature type="sequence variant" id="VAR_025732" description="In VMD2; dbSNP:rs1445469923." evidence="18">
    <original>F</original>
    <variation>L</variation>
    <location>
        <position position="113"/>
    </location>
</feature>
<feature type="sequence variant" id="VAR_010477" description="In a sporadic case of concentric annular macular dystrophy and VMD2; dbSNP:rs1805142." evidence="5 8">
    <original>E</original>
    <variation>Q</variation>
    <location>
        <position position="119"/>
    </location>
</feature>
<feature type="sequence variant" id="VAR_017379" description="In VMD2; dbSNP:rs281865233." evidence="8">
    <original>N</original>
    <variation>K</variation>
    <location>
        <position position="133"/>
    </location>
</feature>
<feature type="sequence variant" id="VAR_010478" description="In VMD2; dbSNP:rs281865234." evidence="4 8">
    <original>G</original>
    <variation>S</variation>
    <location>
        <position position="135"/>
    </location>
</feature>
<feature type="sequence variant" id="VAR_017380" description="In VMD2; abolishes membrane insertion; dbSNP:rs281865235." evidence="8 21">
    <original>L</original>
    <variation>R</variation>
    <location>
        <position position="140"/>
    </location>
</feature>
<feature type="sequence variant" id="VAR_063169" description="In RP50 and ARB; possible decrease in protein stability; causes protein mislocalization to the cytoplasm and reduction of channel activity; dbSNP:rs267606678." evidence="26 27">
    <original>L</original>
    <variation>V</variation>
    <location>
        <position position="140"/>
    </location>
</feature>
<feature type="sequence variant" id="VAR_000847" description="In VMD2 and ARB; no effect on subcellular location in induced pluripotent stem cell-derived retinal pigment epithelial cells; loss of cell membrane localization in transfected MDCK.2 cells; possible decrease in protein stability; reduced chloride conductance; dbSNP:rs121918284." evidence="8 22 27 28">
    <original>R</original>
    <variation>H</variation>
    <location>
        <position position="141"/>
    </location>
</feature>
<feature type="sequence variant" id="VAR_010479" description="In VMD2; sporadic; requires 2 nucleotide substitutions; dbSNP:rs1800995." evidence="5">
    <original>A</original>
    <variation>K</variation>
    <location>
        <position position="146"/>
    </location>
</feature>
<feature type="sequence variant" id="VAR_043493" description="In ARB; no effect on protein stability; loss of cell membrane localization in transfected MDCK.2 cells; reduced whole-cell conductance; dbSNP:rs1417478879." evidence="22 27">
    <original>P</original>
    <variation>A</variation>
    <location>
        <position position="152"/>
    </location>
</feature>
<feature type="sequence variant" id="VAR_017381" description="In ARB and VMD2; no effect on subcellular location in transfected MDCK.2 and HEK293T cells; possible decrease in protein stability; reduced chloride conductance; dbSNP:rs200277476." evidence="8 27 29">
    <original>A</original>
    <variation>V</variation>
    <location>
        <position position="195"/>
    </location>
</feature>
<feature type="sequence variant" id="VAR_025733" description="In VMD2; dbSNP:rs199529046." evidence="8">
    <original>I</original>
    <variation>T</variation>
    <location>
        <position position="201"/>
    </location>
</feature>
<feature type="sequence variant" id="VAR_075347" description="In ARB; possible decrease in protein stability; loss of cell membrane localization in transfected MDCK.2 cells; reduced chloride conductance; dbSNP:rs765998048." evidence="27">
    <original>R</original>
    <variation>W</variation>
    <location>
        <position position="202"/>
    </location>
</feature>
<feature type="sequence variant" id="VAR_063170" description="In RP50; reduced channel activity; dbSNP:rs267606680." evidence="26">
    <original>I</original>
    <variation>T</variation>
    <location>
        <position position="205"/>
    </location>
</feature>
<feature type="sequence variant" id="VAR_025734" description="In VMD2; benign; dbSNP:rs74653691." evidence="8">
    <original>L</original>
    <variation>I</variation>
    <location>
        <position position="207"/>
    </location>
</feature>
<feature type="sequence variant" id="VAR_000848" description="In VMD2; uncertain significance; dbSNP:rs281865237." evidence="9">
    <original>S</original>
    <variation>N</variation>
    <location>
        <position position="209"/>
    </location>
</feature>
<feature type="sequence variant" id="VAR_010480" description="In a sporadic case of age-related macular degeneration; dbSNP:rs281865275." evidence="5">
    <original>T</original>
    <variation>I</variation>
    <location>
        <position position="216"/>
    </location>
</feature>
<feature type="sequence variant" id="VAR_000849" description="In VMD2; dbSNP:rs281865238." evidence="3 4 8 10 24">
    <original>R</original>
    <variation>C</variation>
    <location>
        <position position="218"/>
    </location>
</feature>
<feature type="sequence variant" id="VAR_010481" description="In VMD2; dbSNP:rs281865239." evidence="8 10">
    <original>R</original>
    <variation>H</variation>
    <location>
        <position position="218"/>
    </location>
</feature>
<feature type="sequence variant" id="VAR_000850" description="In VMD2." evidence="33">
    <original>R</original>
    <variation>Q</variation>
    <location>
        <position position="218"/>
    </location>
</feature>
<feature type="sequence variant" id="VAR_000851" description="In VMD2; does not affect protein homooligomerization; inhibits chloride channel activity; dbSNP:rs281865238." evidence="4 9 12">
    <original>R</original>
    <variation>S</variation>
    <location>
        <position position="218"/>
    </location>
</feature>
<feature type="sequence variant" id="VAR_025735" description="In VMD2; dbSNP:rs281865240." evidence="6">
    <original>C</original>
    <variation>W</variation>
    <location>
        <position position="221"/>
    </location>
</feature>
<feature type="sequence variant" id="VAR_025736" description="In a family affected by Leber congenital amaurosis/VMD2 and VMD2; dbSNP:rs281865241." evidence="7 8">
    <original>G</original>
    <variation>V</variation>
    <location>
        <position position="222"/>
    </location>
</feature>
<feature type="sequence variant" id="VAR_000852" description="In VMD2; dbSNP:rs281865242." evidence="9">
    <original>L</original>
    <variation>M</variation>
    <location>
        <position position="224"/>
    </location>
</feature>
<feature type="sequence variant" id="VAR_025737" description="In VMD2; dbSNP:rs281865243." evidence="8">
    <original>L</original>
    <variation>P</variation>
    <location>
        <position position="224"/>
    </location>
</feature>
<feature type="sequence variant" id="VAR_000853" description="In RP50 and VMD2; dbSNP:rs267606677." evidence="8 26 33">
    <original>Y</original>
    <variation>C</variation>
    <location>
        <position position="227"/>
    </location>
</feature>
<feature type="sequence variant" id="VAR_000854" description="In VMD2; dbSNP:rs28941469." evidence="8 25 32 33">
    <original>Y</original>
    <variation>N</variation>
    <location>
        <position position="227"/>
    </location>
</feature>
<feature type="sequence variant" id="VAR_063171" description="In RP50; causes protein mislocalization to the cytoplasm; dbSNP:rs267606676." evidence="26">
    <original>D</original>
    <variation>N</variation>
    <location>
        <position position="228"/>
    </location>
</feature>
<feature type="sequence variant" id="VAR_000855" description="In VMD2; dbSNP:rs281865244." evidence="9">
    <original>S</original>
    <variation>R</variation>
    <location>
        <position position="231"/>
    </location>
</feature>
<feature type="sequence variant" id="VAR_010482" description="In VMD2; dbSNP:rs281865245." evidence="10">
    <original>V</original>
    <variation>L</variation>
    <location>
        <position position="235"/>
    </location>
</feature>
<feature type="sequence variant" id="VAR_000856" description="In VMD2; dbSNP:rs281865245." evidence="33">
    <original>V</original>
    <variation>M</variation>
    <location>
        <position position="235"/>
    </location>
</feature>
<feature type="sequence variant" id="VAR_058275" description="In VRCP; dbSNP:rs121918291." evidence="19">
    <original>Y</original>
    <variation>C</variation>
    <location>
        <position position="236"/>
    </location>
</feature>
<feature type="sequence variant" id="VAR_000857" description="In VMD2; dbSNP:rs281865246." evidence="9 27">
    <original>T</original>
    <variation>R</variation>
    <location>
        <position position="237"/>
    </location>
</feature>
<feature type="sequence variant" id="VAR_058276" description="In VRCP; dbSNP:rs121918290." evidence="19">
    <original>V</original>
    <variation>M</variation>
    <location>
        <position position="239"/>
    </location>
</feature>
<feature type="sequence variant" id="VAR_025738" description="In VMD2; dbSNP:rs281865247." evidence="17">
    <original>T</original>
    <variation>N</variation>
    <location>
        <position position="241"/>
    </location>
</feature>
<feature type="sequence variant" id="VAR_058277" description="In VMD2; late-onset of visual disturbance." evidence="24">
    <original>V</original>
    <variation>M</variation>
    <location>
        <position position="242"/>
    </location>
</feature>
<feature type="sequence variant" id="VAR_025739" description="In VMD2; dbSNP:rs137853905." evidence="8">
    <original>A</original>
    <variation>T</variation>
    <location>
        <position position="243"/>
    </location>
</feature>
<feature type="sequence variant" id="VAR_000858" description="In VMD2; dbSNP:rs28940570." evidence="9 25">
    <original>A</original>
    <variation>V</variation>
    <location>
        <position position="243"/>
    </location>
</feature>
<feature type="sequence variant" id="VAR_025740" description="In age-related macular degeneration; dbSNP:rs281865276." evidence="8">
    <original>V</original>
    <variation>I</variation>
    <location>
        <position position="275"/>
    </location>
</feature>
<feature type="sequence variant" id="VAR_025741" description="In VMD2; dbSNP:rs281865248." evidence="8">
    <original>F</original>
    <variation>L</variation>
    <location>
        <position position="276"/>
    </location>
</feature>
<feature type="sequence variant" id="VAR_088972" description="In VMD2; abolishes membrane insertion." evidence="21">
    <location>
        <position position="281"/>
    </location>
</feature>
<feature type="sequence variant" id="VAR_010483" description="In VMD2; dbSNP:rs281865250." evidence="4">
    <original>Q</original>
    <variation>K</variation>
    <location>
        <position position="293"/>
    </location>
</feature>
<feature type="sequence variant" id="VAR_025742" description="In VMD2; dbSNP:rs281865251." evidence="17">
    <original>L</original>
    <variation>V</variation>
    <location>
        <position position="294"/>
    </location>
</feature>
<feature type="sequence variant" id="VAR_025743" description="In VMD2; dbSNP:rs281865253." evidence="13">
    <original>I</original>
    <variation>T</variation>
    <location>
        <position position="295"/>
    </location>
</feature>
<feature type="sequence variant" id="VAR_000859" description="In VMD2." evidence="9 33">
    <location>
        <position position="295"/>
    </location>
</feature>
<feature type="sequence variant" id="VAR_025744" description="In VMD2; dbSNP:rs281865254." evidence="8">
    <original>N</original>
    <variation>H</variation>
    <location>
        <position position="296"/>
    </location>
</feature>
<feature type="sequence variant" id="VAR_010484" description="In VMD2; dbSNP:rs281865255." evidence="10">
    <original>N</original>
    <variation>S</variation>
    <location>
        <position position="296"/>
    </location>
</feature>
<feature type="sequence variant" id="VAR_000860" description="In VMD2; dbSNP:rs1805143." evidence="8 33">
    <original>P</original>
    <variation>A</variation>
    <location>
        <position position="297"/>
    </location>
</feature>
<feature type="sequence variant" id="VAR_010485" description="In VMD2; dbSNP:rs1805143." evidence="5 16">
    <original>P</original>
    <variation>S</variation>
    <location>
        <position position="297"/>
    </location>
</feature>
<feature type="sequence variant" id="VAR_025745" description="In VMD2; dbSNP:rs281865257." evidence="17">
    <original>F</original>
    <variation>S</variation>
    <location>
        <position position="298"/>
    </location>
</feature>
<feature type="sequence variant" id="VAR_058313" description="In VMD2." evidence="25">
    <original>G</original>
    <variation>A</variation>
    <location>
        <position position="299"/>
    </location>
</feature>
<feature type="sequence variant" id="VAR_000861" description="In VMD2; does not affect protein homooligomerization; inhibits chloride channel activity; dbSNP:rs28941468." evidence="12 32">
    <original>G</original>
    <variation>E</variation>
    <location>
        <position position="299"/>
    </location>
</feature>
<feature type="sequence variant" id="VAR_010486" description="In VMD2; dbSNP:rs1805144." evidence="3 5 8 16">
    <original>E</original>
    <variation>D</variation>
    <location>
        <position position="300"/>
    </location>
</feature>
<feature type="sequence variant" id="VAR_000862" description="In VMD2; dbSNP:rs281865258." evidence="8 9">
    <original>E</original>
    <variation>K</variation>
    <location>
        <position position="300"/>
    </location>
</feature>
<feature type="sequence variant" id="VAR_000863" description="In VMD2; dbSNP:rs281865261." evidence="3 9">
    <original>D</original>
    <variation>E</variation>
    <location>
        <position position="301"/>
    </location>
</feature>
<feature type="sequence variant" id="VAR_000864" description="In VMD2; dbSNP:rs281865259." evidence="9">
    <original>D</original>
    <variation>N</variation>
    <location>
        <position position="301"/>
    </location>
</feature>
<feature type="sequence variant" id="VAR_058278" description="In VMD2." evidence="25">
    <location>
        <begin position="302"/>
        <end position="304"/>
    </location>
</feature>
<feature type="sequence variant" id="VAR_025746" description="In VMD2; dbSNP:rs281865263." evidence="8">
    <original>D</original>
    <variation>G</variation>
    <location>
        <position position="302"/>
    </location>
</feature>
<feature type="sequence variant" id="VAR_025747" description="In VMD2; dbSNP:rs281865262." evidence="14">
    <original>D</original>
    <variation>H</variation>
    <location>
        <position position="302"/>
    </location>
</feature>
<feature type="sequence variant" id="VAR_025748" description="In VMD2; dbSNP:rs281865263." evidence="8">
    <original>D</original>
    <variation>V</variation>
    <location>
        <position position="302"/>
    </location>
</feature>
<feature type="sequence variant" id="VAR_025749" description="In VMD2; dbSNP:rs281865264." evidence="14">
    <original>D</original>
    <variation>E</variation>
    <location>
        <position position="303"/>
    </location>
</feature>
<feature type="sequence variant" id="VAR_000865" description="In VMD2; dbSNP:rs281865265." evidence="33">
    <original>F</original>
    <variation>S</variation>
    <location>
        <position position="305"/>
    </location>
</feature>
<feature type="sequence variant" id="VAR_025750" description="In VMD2; dbSNP:rs281865267." evidence="8">
    <original>E</original>
    <variation>D</variation>
    <location>
        <position position="306"/>
    </location>
</feature>
<feature type="sequence variant" id="VAR_025751" description="In VMD2; dbSNP:rs281865266." evidence="8">
    <original>E</original>
    <variation>G</variation>
    <location>
        <position position="306"/>
    </location>
</feature>
<feature type="sequence variant" id="VAR_025752" description="In VMD2; dbSNP:rs281865268." evidence="8">
    <original>T</original>
    <variation>A</variation>
    <location>
        <position position="307"/>
    </location>
</feature>
<feature type="sequence variant" id="VAR_010487" description="In VMD2; dbSNP:rs281865269." evidence="3 8">
    <original>T</original>
    <variation>I</variation>
    <location>
        <position position="307"/>
    </location>
</feature>
<feature type="sequence variant" id="VAR_025753" description="In VMD2; dbSNP:rs281865270." evidence="14">
    <original>N</original>
    <variation>S</variation>
    <location>
        <position position="308"/>
    </location>
</feature>
<feature type="sequence variant" id="VAR_000866" description="In VMD2; dbSNP:rs281865271." evidence="9">
    <original>I</original>
    <variation>T</variation>
    <location>
        <position position="310"/>
    </location>
</feature>
<feature type="sequence variant" id="VAR_000867" description="In VMD2; dbSNP:rs1941820458." evidence="9">
    <original>V</original>
    <variation>G</variation>
    <location>
        <position position="311"/>
    </location>
</feature>
<feature type="sequence variant" id="VAR_000868" description="In VMD2 and ARB; no effect on protein stability; loss of cell membrane localization in transfected MDCK.2 cells; reduced chloride conductance; dbSNP:rs281865277." evidence="9 22 26 27">
    <original>D</original>
    <variation>N</variation>
    <location>
        <position position="312"/>
    </location>
</feature>
<feature type="sequence variant" id="VAR_043494" description="In ARB; no effect on protein stability; loss of cell membrane localization in transfected MDCK.2 cells; reduced chloride conductance; dbSNP:rs121918287." evidence="22 27">
    <original>V</original>
    <variation>M</variation>
    <location>
        <position position="317"/>
    </location>
</feature>
<feature type="sequence variant" id="VAR_043495" description="In ARB; possible decrease in protein stability; loss of cell membrane localization in transfected MDCK.2 cells; reduced chloride conductance; dbSNP:rs368387447." evidence="22 27">
    <original>M</original>
    <variation>T</variation>
    <location>
        <position position="325"/>
    </location>
</feature>
<feature type="sequence variant" id="VAR_043496" description="In dbSNP:rs17854138." evidence="20">
    <original>A</original>
    <variation>V</variation>
    <location>
        <position position="357"/>
    </location>
</feature>
<feature type="sequence variant" id="VAR_010488" description="In dbSNP:rs200582915." evidence="5">
    <original>E</original>
    <variation>A</variation>
    <location>
        <position position="525"/>
    </location>
</feature>
<feature type="sequence variant" id="VAR_010489" description="In dbSNP:rs147192139." evidence="5">
    <original>E</original>
    <variation>K</variation>
    <location>
        <position position="557"/>
    </location>
</feature>
<feature type="sequence variant" id="VAR_010490" description="In dbSNP:rs281865283." evidence="5">
    <original>T</original>
    <variation>A</variation>
    <location>
        <position position="561"/>
    </location>
</feature>
<feature type="sequence variant" id="VAR_010491" description="In a sporadic case of age-related macular degeneration; uncertain significance; dbSNP:rs148060787." evidence="5">
    <original>L</original>
    <variation>F</variation>
    <location>
        <position position="567"/>
    </location>
</feature>
<feature type="sequence variant" id="VAR_009278" description="In dbSNP:rs1800010.">
    <original>E</original>
    <variation>V</variation>
    <location>
        <position position="578"/>
    </location>
</feature>
<feature type="mutagenesis site" description="Impairs inactivation of ligand-gated anion channel activity by sulfhydryl-reactive agents; when associated with A-42; A-69; A-221 and A-251." evidence="12">
    <original>C</original>
    <variation>A</variation>
    <location>
        <position position="23"/>
    </location>
</feature>
<feature type="mutagenesis site" description="Impairs inactivation of ligand-gated anion channel activity by sulfhydryl-reactive agents; when associated with A-23; A-69; A-221 and A-251." evidence="12">
    <original>C</original>
    <variation>A</variation>
    <location>
        <position position="42"/>
    </location>
</feature>
<feature type="mutagenesis site" description="Impairs inactivation of ligand-gated anion channel activity by sulfhydryl-reactive agents; when associated with A-23; A-42; A-221 and A-251." evidence="12">
    <original>C</original>
    <variation>A</variation>
    <location>
        <position position="69"/>
    </location>
</feature>
<feature type="mutagenesis site" description="Impairs inactivation of ligand-gated anion channel activity by sulfhydryl-reactive agents; when associated with A-23; A-42; A-69 and A-251." evidence="12">
    <original>C</original>
    <variation>A</variation>
    <location>
        <position position="221"/>
    </location>
</feature>
<feature type="mutagenesis site" description="Impairs inactivation of ligand-gated anion channel activity by sulfhydryl-reactive agents; when associated with A-23; A-42; A-69 and A-221." evidence="12">
    <original>C</original>
    <variation>A</variation>
    <location>
        <position position="251"/>
    </location>
</feature>
<feature type="sequence conflict" description="In Ref. 6; BAH13472." evidence="37" ref="6">
    <original>V</original>
    <variation>T</variation>
    <location>
        <position position="81"/>
    </location>
</feature>
<feature type="helix" evidence="46">
    <location>
        <begin position="6"/>
        <end position="9"/>
    </location>
</feature>
<feature type="helix" evidence="46">
    <location>
        <begin position="16"/>
        <end position="19"/>
    </location>
</feature>
<feature type="helix" evidence="46">
    <location>
        <begin position="20"/>
        <end position="22"/>
    </location>
</feature>
<feature type="helix" evidence="46">
    <location>
        <begin position="28"/>
        <end position="52"/>
    </location>
</feature>
<feature type="helix" evidence="46">
    <location>
        <begin position="56"/>
        <end position="71"/>
    </location>
</feature>
<feature type="turn" evidence="50">
    <location>
        <begin position="72"/>
        <end position="75"/>
    </location>
</feature>
<feature type="helix" evidence="46">
    <location>
        <begin position="76"/>
        <end position="98"/>
    </location>
</feature>
<feature type="helix" evidence="46">
    <location>
        <begin position="104"/>
        <end position="113"/>
    </location>
</feature>
<feature type="helix" evidence="46">
    <location>
        <begin position="119"/>
        <end position="143"/>
    </location>
</feature>
<feature type="helix" evidence="46">
    <location>
        <begin position="145"/>
        <end position="150"/>
    </location>
</feature>
<feature type="helix" evidence="46">
    <location>
        <begin position="154"/>
        <end position="159"/>
    </location>
</feature>
<feature type="helix" evidence="46">
    <location>
        <begin position="165"/>
        <end position="174"/>
    </location>
</feature>
<feature type="helix" evidence="46">
    <location>
        <begin position="183"/>
        <end position="197"/>
    </location>
</feature>
<feature type="strand" evidence="49">
    <location>
        <begin position="200"/>
        <end position="203"/>
    </location>
</feature>
<feature type="helix" evidence="46">
    <location>
        <begin position="204"/>
        <end position="229"/>
    </location>
</feature>
<feature type="helix" evidence="46">
    <location>
        <begin position="234"/>
        <end position="254"/>
    </location>
</feature>
<feature type="helix" evidence="46">
    <location>
        <begin position="260"/>
        <end position="262"/>
    </location>
</feature>
<feature type="helix" evidence="46">
    <location>
        <begin position="275"/>
        <end position="294"/>
    </location>
</feature>
<feature type="strand" evidence="46">
    <location>
        <begin position="299"/>
        <end position="301"/>
    </location>
</feature>
<feature type="helix" evidence="46">
    <location>
        <begin position="307"/>
        <end position="323"/>
    </location>
</feature>
<feature type="turn" evidence="47">
    <location>
        <begin position="324"/>
        <end position="327"/>
    </location>
</feature>
<feature type="turn" evidence="46">
    <location>
        <begin position="336"/>
        <end position="339"/>
    </location>
</feature>
<feature type="helix" evidence="46">
    <location>
        <begin position="349"/>
        <end position="354"/>
    </location>
</feature>
<feature type="turn" evidence="46">
    <location>
        <begin position="362"/>
        <end position="365"/>
    </location>
</feature>
<feature type="turn" evidence="46">
    <location>
        <begin position="370"/>
        <end position="373"/>
    </location>
</feature>
<feature type="strand" evidence="48">
    <location>
        <begin position="374"/>
        <end position="376"/>
    </location>
</feature>